<feature type="chain" id="PRO_0000081793" description="RNA-binding protein with multiple splicing">
    <location>
        <begin position="1"/>
        <end position="196"/>
    </location>
</feature>
<feature type="domain" description="RRM" evidence="3">
    <location>
        <begin position="24"/>
        <end position="101"/>
    </location>
</feature>
<feature type="region of interest" description="Interaction with RNA" evidence="7">
    <location>
        <begin position="98"/>
        <end position="105"/>
    </location>
</feature>
<feature type="site" description="Interaction with RNA" evidence="7">
    <location>
        <position position="27"/>
    </location>
</feature>
<feature type="site" description="Interaction with RNA" evidence="7">
    <location>
        <position position="61"/>
    </location>
</feature>
<feature type="modified residue" description="N-acetylmethionine" evidence="16">
    <location>
        <position position="1"/>
    </location>
</feature>
<feature type="modified residue" description="Phosphothreonine" evidence="2">
    <location>
        <position position="12"/>
    </location>
</feature>
<feature type="modified residue" description="Phosphothreonine" evidence="15">
    <location>
        <position position="113"/>
    </location>
</feature>
<feature type="splice variant" id="VSP_005815" description="In isoform D." evidence="11">
    <original>YELTVPALYPSSPEVWAPYPLYPAELAPALPPPAFTYPASLHAQMRWLPPSEATSQGWKSRQFC</original>
    <variation>LGGANEHGERQ</variation>
    <location>
        <begin position="133"/>
        <end position="196"/>
    </location>
</feature>
<feature type="splice variant" id="VSP_005816" description="In isoform E." evidence="11">
    <location>
        <begin position="133"/>
        <end position="176"/>
    </location>
</feature>
<feature type="splice variant" id="VSP_005813" description="In isoform B." evidence="11">
    <original>MRWLPPSEATSQGWKSRQFC</original>
    <variation>LCEGQTVRRSHPLSAPSPDSASLAWFPV</variation>
    <location>
        <begin position="177"/>
        <end position="196"/>
    </location>
</feature>
<feature type="splice variant" id="VSP_005814" description="In isoform C." evidence="9 11">
    <original>MRWLPPSEATSQGWKSRQFC</original>
    <variation>CFSPEAKPNTPVFCPLLQQIRFVSGNVFVTYQPTADQQRELPC</variation>
    <location>
        <begin position="177"/>
        <end position="196"/>
    </location>
</feature>
<feature type="mutagenesis site" description="Abolishes RNA binding." evidence="7">
    <original>F</original>
    <variation>A</variation>
    <location>
        <position position="27"/>
    </location>
</feature>
<feature type="mutagenesis site" description="Impairs dimerization and RNA binding." evidence="7">
    <original>KPR</original>
    <variation>EPE</variation>
    <location>
        <begin position="36"/>
        <end position="38"/>
    </location>
</feature>
<feature type="mutagenesis site" description="Abolishes RNA binding." evidence="7">
    <original>F</original>
    <variation>A</variation>
    <location>
        <position position="65"/>
    </location>
</feature>
<feature type="mutagenesis site" description="Abolishes RNA binding; when associated with A-100." evidence="7">
    <original>E</original>
    <variation>A</variation>
    <location>
        <position position="97"/>
    </location>
</feature>
<feature type="mutagenesis site" description="Abolishes RNA binding; when associated with A-97." evidence="7">
    <original>K</original>
    <variation>A</variation>
    <location>
        <position position="100"/>
    </location>
</feature>
<feature type="mutagenesis site" description="Abolishes RNA binding." evidence="7">
    <original>K</original>
    <variation>E</variation>
    <location>
        <position position="100"/>
    </location>
</feature>
<feature type="mutagenesis site" description="Abolishes RNA binding." evidence="7">
    <original>TK</original>
    <variation>AA</variation>
    <location>
        <begin position="103"/>
        <end position="104"/>
    </location>
</feature>
<feature type="strand" evidence="17">
    <location>
        <begin position="25"/>
        <end position="29"/>
    </location>
</feature>
<feature type="helix" evidence="17">
    <location>
        <begin position="37"/>
        <end position="44"/>
    </location>
</feature>
<feature type="strand" evidence="17">
    <location>
        <begin position="50"/>
        <end position="56"/>
    </location>
</feature>
<feature type="strand" evidence="17">
    <location>
        <begin position="59"/>
        <end position="61"/>
    </location>
</feature>
<feature type="strand" evidence="17">
    <location>
        <begin position="63"/>
        <end position="70"/>
    </location>
</feature>
<feature type="helix" evidence="17">
    <location>
        <begin position="71"/>
        <end position="81"/>
    </location>
</feature>
<feature type="strand" evidence="17">
    <location>
        <begin position="85"/>
        <end position="87"/>
    </location>
</feature>
<feature type="strand" evidence="17">
    <location>
        <begin position="95"/>
        <end position="98"/>
    </location>
</feature>
<feature type="helix" evidence="17">
    <location>
        <begin position="107"/>
        <end position="109"/>
    </location>
</feature>
<reference key="1">
    <citation type="journal article" date="1996" name="Proc. Natl. Acad. Sci. U.S.A.">
        <title>A unique human gene that spans over 230 kb in the human chromosome 8p11-12 and codes multiple family proteins sharing RNA-binding motifs.</title>
        <authorList>
            <person name="Shimamoto A."/>
            <person name="Kitao S."/>
            <person name="Ichikawa K."/>
            <person name="Suzuki N."/>
            <person name="Yamabe Y."/>
            <person name="Imamura O."/>
            <person name="Tokutake Y."/>
            <person name="Satoh M."/>
            <person name="Matsumoto T."/>
            <person name="Kuromitsu J."/>
            <person name="Kataoka H."/>
            <person name="Sugawara K."/>
            <person name="Sugawara M."/>
            <person name="Sugimoto M."/>
            <person name="Goto M."/>
            <person name="Furuichi Y."/>
        </authorList>
    </citation>
    <scope>NUCLEOTIDE SEQUENCE [MRNA] (ISOFORMS A; B; C; D AND E)</scope>
    <scope>TISSUE SPECIFICITY</scope>
    <source>
        <tissue>Lip</tissue>
    </source>
</reference>
<reference key="2">
    <citation type="submission" date="2005-09" db="EMBL/GenBank/DDBJ databases">
        <authorList>
            <person name="Mural R.J."/>
            <person name="Istrail S."/>
            <person name="Sutton G.G."/>
            <person name="Florea L."/>
            <person name="Halpern A.L."/>
            <person name="Mobarry C.M."/>
            <person name="Lippert R."/>
            <person name="Walenz B."/>
            <person name="Shatkay H."/>
            <person name="Dew I."/>
            <person name="Miller J.R."/>
            <person name="Flanigan M.J."/>
            <person name="Edwards N.J."/>
            <person name="Bolanos R."/>
            <person name="Fasulo D."/>
            <person name="Halldorsson B.V."/>
            <person name="Hannenhalli S."/>
            <person name="Turner R."/>
            <person name="Yooseph S."/>
            <person name="Lu F."/>
            <person name="Nusskern D.R."/>
            <person name="Shue B.C."/>
            <person name="Zheng X.H."/>
            <person name="Zhong F."/>
            <person name="Delcher A.L."/>
            <person name="Huson D.H."/>
            <person name="Kravitz S.A."/>
            <person name="Mouchard L."/>
            <person name="Reinert K."/>
            <person name="Remington K.A."/>
            <person name="Clark A.G."/>
            <person name="Waterman M.S."/>
            <person name="Eichler E.E."/>
            <person name="Adams M.D."/>
            <person name="Hunkapiller M.W."/>
            <person name="Myers E.W."/>
            <person name="Venter J.C."/>
        </authorList>
    </citation>
    <scope>NUCLEOTIDE SEQUENCE [LARGE SCALE GENOMIC DNA]</scope>
</reference>
<reference key="3">
    <citation type="journal article" date="2004" name="Genome Res.">
        <title>The status, quality, and expansion of the NIH full-length cDNA project: the Mammalian Gene Collection (MGC).</title>
        <authorList>
            <consortium name="The MGC Project Team"/>
        </authorList>
    </citation>
    <scope>NUCLEOTIDE SEQUENCE [LARGE SCALE MRNA] (ISOFORM C)</scope>
    <source>
        <tissue>Placenta</tissue>
    </source>
</reference>
<reference key="4">
    <citation type="journal article" date="2004" name="Genome Biol.">
        <title>An unappreciated role for RNA surveillance.</title>
        <authorList>
            <person name="Hillman R.T."/>
            <person name="Green R.E."/>
            <person name="Brenner S.E."/>
        </authorList>
    </citation>
    <scope>SPLICE ISOFORM(S) THAT ARE POTENTIAL NMD TARGET(S)</scope>
</reference>
<reference key="5">
    <citation type="journal article" date="2006" name="Nucleic Acids Res.">
        <title>Potentiation of Smad-mediated transcriptional activation by the RNA-binding protein RBPMS.</title>
        <authorList>
            <person name="Sun Y."/>
            <person name="Ding L."/>
            <person name="Zhang H."/>
            <person name="Han J."/>
            <person name="Yang X."/>
            <person name="Yan J."/>
            <person name="Zhu Y."/>
            <person name="Li J."/>
            <person name="Song H."/>
            <person name="Ye Q."/>
        </authorList>
    </citation>
    <scope>FUNCTION</scope>
    <scope>INTERACTION WITH SMAD2; SMAD3; SMAD4 AND TGFBR1</scope>
    <scope>SUBCELLULAR LOCATION</scope>
    <scope>RNA-BINDING</scope>
</reference>
<reference key="6">
    <citation type="journal article" date="2008" name="Proc. Natl. Acad. Sci. U.S.A.">
        <title>A quantitative atlas of mitotic phosphorylation.</title>
        <authorList>
            <person name="Dephoure N."/>
            <person name="Zhou C."/>
            <person name="Villen J."/>
            <person name="Beausoleil S.A."/>
            <person name="Bakalarski C.E."/>
            <person name="Elledge S.J."/>
            <person name="Gygi S.P."/>
        </authorList>
    </citation>
    <scope>PHOSPHORYLATION [LARGE SCALE ANALYSIS] AT THR-113</scope>
    <scope>IDENTIFICATION BY MASS SPECTROMETRY [LARGE SCALE ANALYSIS]</scope>
    <source>
        <tissue>Cervix carcinoma</tissue>
    </source>
</reference>
<reference key="7">
    <citation type="journal article" date="2012" name="Proc. Natl. Acad. Sci. U.S.A.">
        <title>N-terminal acetylome analyses and functional insights of the N-terminal acetyltransferase NatB.</title>
        <authorList>
            <person name="Van Damme P."/>
            <person name="Lasa M."/>
            <person name="Polevoda B."/>
            <person name="Gazquez C."/>
            <person name="Elosegui-Artola A."/>
            <person name="Kim D.S."/>
            <person name="De Juan-Pardo E."/>
            <person name="Demeyer K."/>
            <person name="Hole K."/>
            <person name="Larrea E."/>
            <person name="Timmerman E."/>
            <person name="Prieto J."/>
            <person name="Arnesen T."/>
            <person name="Sherman F."/>
            <person name="Gevaert K."/>
            <person name="Aldabe R."/>
        </authorList>
    </citation>
    <scope>ACETYLATION [LARGE SCALE ANALYSIS] AT MET-1</scope>
    <scope>IDENTIFICATION BY MASS SPECTROMETRY [LARGE SCALE ANALYSIS]</scope>
</reference>
<reference key="8">
    <citation type="journal article" date="2014" name="RNA">
        <title>Identification of the RNA recognition element of the RBPMS family of RNA-binding proteins and their transcriptome-wide mRNA targets.</title>
        <authorList>
            <person name="Farazi T.A."/>
            <person name="Leonhardt C.S."/>
            <person name="Mukherjee N."/>
            <person name="Mihailovic A."/>
            <person name="Li S."/>
            <person name="Max K.E."/>
            <person name="Meyer C."/>
            <person name="Yamaji M."/>
            <person name="Cekan P."/>
            <person name="Jacobs N.C."/>
            <person name="Gerstberger S."/>
            <person name="Bognanni C."/>
            <person name="Larsson E."/>
            <person name="Ohler U."/>
            <person name="Tuschl T."/>
        </authorList>
    </citation>
    <scope>FUNCTION</scope>
    <scope>SUBCELLULAR LOCATION</scope>
    <scope>DOMAIN</scope>
</reference>
<reference evidence="13 14" key="9">
    <citation type="journal article" date="2015" name="Q. Rev. Biophys.">
        <title>Structural basis underlying CAC RNA recognition by the RRM domain of dimeric RNA-binding protein RBPMS.</title>
        <authorList>
            <person name="Teplova M."/>
            <person name="Farazi T.A."/>
            <person name="Tuschl T."/>
            <person name="Patel D.J."/>
        </authorList>
    </citation>
    <scope>X-RAY CRYSTALLOGRAPHY (1.79 ANGSTROMS) OF 14-111 OF APOPROTEIN AND IN COMPLEX WITH RNA</scope>
    <scope>FUNCTION IN RNA-BINDING</scope>
    <scope>SUBUNIT</scope>
    <scope>SUBCELLULAR LOCATION</scope>
    <scope>MUTAGENESIS OF PHE-27; 36-LYS--ARG-38; PHE-65; GLU-97; LYS-100 AND 103-THR-LYS-104</scope>
</reference>
<protein>
    <recommendedName>
        <fullName evidence="11">RNA-binding protein with multiple splicing</fullName>
        <shortName evidence="11">RBP-MS</shortName>
        <shortName evidence="10">RBPMS</shortName>
    </recommendedName>
    <alternativeName>
        <fullName evidence="2">Heart and RRM expressed sequence</fullName>
        <shortName evidence="2">Hermes</shortName>
    </alternativeName>
</protein>
<dbReference type="EMBL" id="D84110">
    <property type="protein sequence ID" value="BAA12228.1"/>
    <property type="molecule type" value="mRNA"/>
</dbReference>
<dbReference type="EMBL" id="D84107">
    <property type="protein sequence ID" value="BAA12225.1"/>
    <property type="molecule type" value="mRNA"/>
</dbReference>
<dbReference type="EMBL" id="D84108">
    <property type="protein sequence ID" value="BAA12226.1"/>
    <property type="molecule type" value="mRNA"/>
</dbReference>
<dbReference type="EMBL" id="D84109">
    <property type="protein sequence ID" value="BAA12227.1"/>
    <property type="molecule type" value="mRNA"/>
</dbReference>
<dbReference type="EMBL" id="D84111">
    <property type="protein sequence ID" value="BAA12229.1"/>
    <property type="molecule type" value="mRNA"/>
</dbReference>
<dbReference type="EMBL" id="CH471080">
    <property type="protein sequence ID" value="EAW63451.1"/>
    <property type="molecule type" value="Genomic_DNA"/>
</dbReference>
<dbReference type="EMBL" id="CH471080">
    <property type="protein sequence ID" value="EAW63453.1"/>
    <property type="molecule type" value="Genomic_DNA"/>
</dbReference>
<dbReference type="EMBL" id="BC003608">
    <property type="protein sequence ID" value="AAH03608.1"/>
    <property type="molecule type" value="mRNA"/>
</dbReference>
<dbReference type="CCDS" id="CCDS34875.1">
    <molecule id="Q93062-2"/>
</dbReference>
<dbReference type="CCDS" id="CCDS34876.1">
    <molecule id="Q93062-3"/>
</dbReference>
<dbReference type="CCDS" id="CCDS6077.1">
    <molecule id="Q93062-1"/>
</dbReference>
<dbReference type="PIR" id="JC6127">
    <property type="entry name" value="JC6127"/>
</dbReference>
<dbReference type="RefSeq" id="NP_001008710.1">
    <molecule id="Q93062-1"/>
    <property type="nucleotide sequence ID" value="NM_001008710.3"/>
</dbReference>
<dbReference type="RefSeq" id="NP_001008711.1">
    <molecule id="Q93062-2"/>
    <property type="nucleotide sequence ID" value="NM_001008711.3"/>
</dbReference>
<dbReference type="RefSeq" id="NP_001008712.1">
    <molecule id="Q93062-3"/>
    <property type="nucleotide sequence ID" value="NM_001008712.3"/>
</dbReference>
<dbReference type="RefSeq" id="NP_006858.1">
    <molecule id="Q93062-1"/>
    <property type="nucleotide sequence ID" value="NM_006867.4"/>
</dbReference>
<dbReference type="RefSeq" id="XP_016868475.1">
    <property type="nucleotide sequence ID" value="XM_017012986.1"/>
</dbReference>
<dbReference type="PDB" id="5CYJ">
    <property type="method" value="X-ray"/>
    <property type="resolution" value="1.79 A"/>
    <property type="chains" value="A/B=14-111"/>
</dbReference>
<dbReference type="PDB" id="5DET">
    <property type="method" value="X-ray"/>
    <property type="resolution" value="1.95 A"/>
    <property type="chains" value="A/B=14-111"/>
</dbReference>
<dbReference type="PDBsum" id="5CYJ"/>
<dbReference type="PDBsum" id="5DET"/>
<dbReference type="BMRB" id="Q93062"/>
<dbReference type="SMR" id="Q93062"/>
<dbReference type="BioGRID" id="116220">
    <property type="interactions" value="368"/>
</dbReference>
<dbReference type="FunCoup" id="Q93062">
    <property type="interactions" value="1822"/>
</dbReference>
<dbReference type="IntAct" id="Q93062">
    <property type="interactions" value="288"/>
</dbReference>
<dbReference type="MINT" id="Q93062"/>
<dbReference type="STRING" id="9606.ENSP00000340176"/>
<dbReference type="MoonDB" id="Q93062">
    <property type="type" value="Predicted"/>
</dbReference>
<dbReference type="GlyGen" id="Q93062">
    <property type="glycosylation" value="1 site, 1 O-linked glycan (1 site)"/>
</dbReference>
<dbReference type="iPTMnet" id="Q93062"/>
<dbReference type="PhosphoSitePlus" id="Q93062"/>
<dbReference type="BioMuta" id="RBPMS"/>
<dbReference type="DMDM" id="13124469"/>
<dbReference type="jPOST" id="Q93062"/>
<dbReference type="MassIVE" id="Q93062"/>
<dbReference type="PaxDb" id="9606-ENSP00000340176"/>
<dbReference type="PeptideAtlas" id="Q93062"/>
<dbReference type="ProteomicsDB" id="75691">
    <molecule id="Q93062-1"/>
</dbReference>
<dbReference type="ProteomicsDB" id="75692">
    <molecule id="Q93062-2"/>
</dbReference>
<dbReference type="ProteomicsDB" id="75693">
    <molecule id="Q93062-3"/>
</dbReference>
<dbReference type="ProteomicsDB" id="75694">
    <molecule id="Q93062-4"/>
</dbReference>
<dbReference type="ProteomicsDB" id="75695">
    <molecule id="Q93062-5"/>
</dbReference>
<dbReference type="Pumba" id="Q93062"/>
<dbReference type="Antibodypedia" id="23209">
    <property type="antibodies" value="475 antibodies from 30 providers"/>
</dbReference>
<dbReference type="DNASU" id="11030"/>
<dbReference type="Ensembl" id="ENST00000287771.9">
    <molecule id="Q93062-2"/>
    <property type="protein sequence ID" value="ENSP00000287771.5"/>
    <property type="gene ID" value="ENSG00000157110.16"/>
</dbReference>
<dbReference type="Ensembl" id="ENST00000320203.8">
    <molecule id="Q93062-1"/>
    <property type="protein sequence ID" value="ENSP00000318102.4"/>
    <property type="gene ID" value="ENSG00000157110.16"/>
</dbReference>
<dbReference type="Ensembl" id="ENST00000339877.8">
    <molecule id="Q93062-3"/>
    <property type="protein sequence ID" value="ENSP00000340176.4"/>
    <property type="gene ID" value="ENSG00000157110.16"/>
</dbReference>
<dbReference type="Ensembl" id="ENST00000397323.9">
    <molecule id="Q93062-1"/>
    <property type="protein sequence ID" value="ENSP00000380486.4"/>
    <property type="gene ID" value="ENSG00000157110.16"/>
</dbReference>
<dbReference type="GeneID" id="11030"/>
<dbReference type="KEGG" id="hsa:11030"/>
<dbReference type="MANE-Select" id="ENST00000397323.9">
    <property type="protein sequence ID" value="ENSP00000380486.4"/>
    <property type="RefSeq nucleotide sequence ID" value="NM_001008710.3"/>
    <property type="RefSeq protein sequence ID" value="NP_001008710.1"/>
</dbReference>
<dbReference type="UCSC" id="uc003xib.5">
    <molecule id="Q93062-1"/>
    <property type="organism name" value="human"/>
</dbReference>
<dbReference type="AGR" id="HGNC:19097"/>
<dbReference type="CTD" id="11030"/>
<dbReference type="DisGeNET" id="11030"/>
<dbReference type="GeneCards" id="RBPMS"/>
<dbReference type="HGNC" id="HGNC:19097">
    <property type="gene designation" value="RBPMS"/>
</dbReference>
<dbReference type="HPA" id="ENSG00000157110">
    <property type="expression patterns" value="Low tissue specificity"/>
</dbReference>
<dbReference type="MIM" id="601558">
    <property type="type" value="gene"/>
</dbReference>
<dbReference type="neXtProt" id="NX_Q93062"/>
<dbReference type="OpenTargets" id="ENSG00000157110"/>
<dbReference type="PharmGKB" id="PA134985584"/>
<dbReference type="VEuPathDB" id="HostDB:ENSG00000157110"/>
<dbReference type="eggNOG" id="KOG1457">
    <property type="taxonomic scope" value="Eukaryota"/>
</dbReference>
<dbReference type="GeneTree" id="ENSGT00940000159617"/>
<dbReference type="HOGENOM" id="CLU_099973_1_1_1"/>
<dbReference type="InParanoid" id="Q93062"/>
<dbReference type="OMA" id="AQIRWIP"/>
<dbReference type="OrthoDB" id="431169at2759"/>
<dbReference type="PAN-GO" id="Q93062">
    <property type="GO annotations" value="1 GO annotation based on evolutionary models"/>
</dbReference>
<dbReference type="PhylomeDB" id="Q93062"/>
<dbReference type="TreeFam" id="TF351070"/>
<dbReference type="PathwayCommons" id="Q93062"/>
<dbReference type="SignaLink" id="Q93062"/>
<dbReference type="SIGNOR" id="Q93062"/>
<dbReference type="BioGRID-ORCS" id="11030">
    <property type="hits" value="19 hits in 1153 CRISPR screens"/>
</dbReference>
<dbReference type="CD-CODE" id="232F8A39">
    <property type="entry name" value="P-body"/>
</dbReference>
<dbReference type="CD-CODE" id="D8E9712B">
    <property type="entry name" value="Neuronal RNP granule"/>
</dbReference>
<dbReference type="CD-CODE" id="DEE660B4">
    <property type="entry name" value="Stress granule"/>
</dbReference>
<dbReference type="ChiTaRS" id="RBPMS">
    <property type="organism name" value="human"/>
</dbReference>
<dbReference type="EvolutionaryTrace" id="Q93062"/>
<dbReference type="GeneWiki" id="RBPMS"/>
<dbReference type="GenomeRNAi" id="11030"/>
<dbReference type="Pharos" id="Q93062">
    <property type="development level" value="Tbio"/>
</dbReference>
<dbReference type="PRO" id="PR:Q93062"/>
<dbReference type="Proteomes" id="UP000005640">
    <property type="component" value="Chromosome 8"/>
</dbReference>
<dbReference type="RNAct" id="Q93062">
    <property type="molecule type" value="protein"/>
</dbReference>
<dbReference type="Bgee" id="ENSG00000157110">
    <property type="expression patterns" value="Expressed in popliteal artery and 198 other cell types or tissues"/>
</dbReference>
<dbReference type="ExpressionAtlas" id="Q93062">
    <property type="expression patterns" value="baseline and differential"/>
</dbReference>
<dbReference type="GO" id="GO:0005737">
    <property type="term" value="C:cytoplasm"/>
    <property type="evidence" value="ECO:0000314"/>
    <property type="project" value="UniProtKB"/>
</dbReference>
<dbReference type="GO" id="GO:0010494">
    <property type="term" value="C:cytoplasmic stress granule"/>
    <property type="evidence" value="ECO:0000314"/>
    <property type="project" value="UniProtKB"/>
</dbReference>
<dbReference type="GO" id="GO:0005829">
    <property type="term" value="C:cytosol"/>
    <property type="evidence" value="ECO:0000314"/>
    <property type="project" value="HPA"/>
</dbReference>
<dbReference type="GO" id="GO:0005654">
    <property type="term" value="C:nucleoplasm"/>
    <property type="evidence" value="ECO:0000314"/>
    <property type="project" value="HPA"/>
</dbReference>
<dbReference type="GO" id="GO:0005634">
    <property type="term" value="C:nucleus"/>
    <property type="evidence" value="ECO:0000314"/>
    <property type="project" value="UniProtKB"/>
</dbReference>
<dbReference type="GO" id="GO:0000932">
    <property type="term" value="C:P-body"/>
    <property type="evidence" value="ECO:0007669"/>
    <property type="project" value="UniProtKB-SubCell"/>
</dbReference>
<dbReference type="GO" id="GO:0060090">
    <property type="term" value="F:molecular adaptor activity"/>
    <property type="evidence" value="ECO:0000250"/>
    <property type="project" value="UniProtKB"/>
</dbReference>
<dbReference type="GO" id="GO:0003730">
    <property type="term" value="F:mRNA 3'-UTR binding"/>
    <property type="evidence" value="ECO:0000314"/>
    <property type="project" value="UniProtKB"/>
</dbReference>
<dbReference type="GO" id="GO:0003729">
    <property type="term" value="F:mRNA binding"/>
    <property type="evidence" value="ECO:0000318"/>
    <property type="project" value="GO_Central"/>
</dbReference>
<dbReference type="GO" id="GO:1990715">
    <property type="term" value="F:mRNA CDS binding"/>
    <property type="evidence" value="ECO:0000314"/>
    <property type="project" value="UniProtKB"/>
</dbReference>
<dbReference type="GO" id="GO:0097157">
    <property type="term" value="F:pre-mRNA intronic binding"/>
    <property type="evidence" value="ECO:0000314"/>
    <property type="project" value="UniProtKB"/>
</dbReference>
<dbReference type="GO" id="GO:0042803">
    <property type="term" value="F:protein homodimerization activity"/>
    <property type="evidence" value="ECO:0000353"/>
    <property type="project" value="UniProtKB"/>
</dbReference>
<dbReference type="GO" id="GO:0003723">
    <property type="term" value="F:RNA binding"/>
    <property type="evidence" value="ECO:0000314"/>
    <property type="project" value="UniProtKB"/>
</dbReference>
<dbReference type="GO" id="GO:0003713">
    <property type="term" value="F:transcription coactivator activity"/>
    <property type="evidence" value="ECO:0000314"/>
    <property type="project" value="UniProtKB"/>
</dbReference>
<dbReference type="GO" id="GO:0065003">
    <property type="term" value="P:protein-containing complex assembly"/>
    <property type="evidence" value="ECO:0000250"/>
    <property type="project" value="UniProtKB"/>
</dbReference>
<dbReference type="GO" id="GO:0000381">
    <property type="term" value="P:regulation of alternative mRNA splicing, via spliceosome"/>
    <property type="evidence" value="ECO:0000250"/>
    <property type="project" value="UniProtKB"/>
</dbReference>
<dbReference type="GO" id="GO:0006979">
    <property type="term" value="P:response to oxidative stress"/>
    <property type="evidence" value="ECO:0000315"/>
    <property type="project" value="UniProtKB"/>
</dbReference>
<dbReference type="GO" id="GO:0006396">
    <property type="term" value="P:RNA processing"/>
    <property type="evidence" value="ECO:0000304"/>
    <property type="project" value="ProtInc"/>
</dbReference>
<dbReference type="GO" id="GO:0060395">
    <property type="term" value="P:SMAD protein signal transduction"/>
    <property type="evidence" value="ECO:0000314"/>
    <property type="project" value="UniProtKB"/>
</dbReference>
<dbReference type="CDD" id="cd12682">
    <property type="entry name" value="RRM_RBPMS"/>
    <property type="match status" value="1"/>
</dbReference>
<dbReference type="FunFam" id="3.30.70.330:FF:000037">
    <property type="entry name" value="RNA-binding protein with multiple splicing 2"/>
    <property type="match status" value="1"/>
</dbReference>
<dbReference type="Gene3D" id="3.30.70.330">
    <property type="match status" value="1"/>
</dbReference>
<dbReference type="InterPro" id="IPR012677">
    <property type="entry name" value="Nucleotide-bd_a/b_plait_sf"/>
</dbReference>
<dbReference type="InterPro" id="IPR035979">
    <property type="entry name" value="RBD_domain_sf"/>
</dbReference>
<dbReference type="InterPro" id="IPR000504">
    <property type="entry name" value="RRM_dom"/>
</dbReference>
<dbReference type="PANTHER" id="PTHR10501">
    <property type="entry name" value="U1 SMALL NUCLEAR RIBONUCLEOPROTEIN A/U2 SMALL NUCLEAR RIBONUCLEOPROTEIN B"/>
    <property type="match status" value="1"/>
</dbReference>
<dbReference type="Pfam" id="PF00076">
    <property type="entry name" value="RRM_1"/>
    <property type="match status" value="1"/>
</dbReference>
<dbReference type="SMART" id="SM00360">
    <property type="entry name" value="RRM"/>
    <property type="match status" value="1"/>
</dbReference>
<dbReference type="SUPFAM" id="SSF54928">
    <property type="entry name" value="RNA-binding domain, RBD"/>
    <property type="match status" value="1"/>
</dbReference>
<dbReference type="PROSITE" id="PS50102">
    <property type="entry name" value="RRM"/>
    <property type="match status" value="1"/>
</dbReference>
<comment type="function">
    <molecule>Isoform A</molecule>
    <text evidence="1 6 7">RNA binding protein that mediates the regulation of pre-mRNA alternative splicing (AS) (PubMed:24860013, PubMed:26347403). Acts either as activator (FLNB, HSPG2, LIPA1, MYOCD, PTPRF and PPFIBP1) or repressor (TPM1, ACTN1, ITGA7, PIEZO1, LSM14B, MBNL1 and MBML2) of splicing events on specific pre-mRNA targets (By similarity). Together with RNA binding proteins RBFOX2 and MBNL1/2, activates a splicing program associated with differentiated contractile vascular smooth muscle cells (SMC) by regulating AS of numerous pre-mRNA involved in actin cytoskeleton and focal adhesion machineries, suggesting a role in promoting a cell differentiated state (By similarity). Binds to introns, exons and 3'-UTR associated with tandem CAC trinucleotide motifs separated by a variable spacer region, at a minimum as a dimer. The minimal length of RNA required for RBPMS-binding tandem CAC motifs is 15 nt, with spacing ranging from 1 to 9 nt. Can also bind to CA dinucleotide repeats (PubMed:24860013, PubMed:26347403). Mediates repression of TPM1 exon 3 by binding to CAC tandem repeats in the flanking intronic regions, followed by higher-order oligomerization and heterotypic interactions with other splicing regulators including MBNL1 and RBFOX2, which prevents assembly of ATP-dependent splicing complexes (By similarity).</text>
</comment>
<comment type="function">
    <molecule>Isoform C</molecule>
    <text evidence="1 5">Acts as a regulator of pre-mRNA alternative splicing (AS) (By similarity). Binds mRNA (PubMed:17099224). Regulates AS of ACTN1, FLNB, although with lower efficiency than isoform A / RBPMSA (By similarity). Acts as coactivator of SMAD transcriptional activity in a TGFB1-dependent manner, possibly through increased phosphorylation of SMAD2 and SMAD3 at the C-terminal SSXS regions and promotion of the nuclear accumulation of SMAD proteins (PubMed:17099224).</text>
</comment>
<comment type="subunit">
    <text evidence="1 5 7">Homodimer; each protein chain binds one RNA molecule via the external surface of the homodimer (PubMed:26347403). Interacts with RNA binding proteins MBNL1, RBFOX2, RBM4 and RBM14; the interaction allows cooperative assembly of stable cell-specific alternative splicing regulatory complexes (By similarity). Interacts with SMAD2, SMAD3 and SMAD4; the interactions are direct (PubMed:17099224).</text>
</comment>
<comment type="interaction">
    <interactant intactId="EBI-740322">
        <id>Q93062</id>
    </interactant>
    <interactant intactId="EBI-77818">
        <id>Q13444</id>
        <label>ADAM15</label>
    </interactant>
    <organismsDiffer>false</organismsDiffer>
    <experiments>3</experiments>
</comment>
<comment type="interaction">
    <interactant intactId="EBI-740322">
        <id>Q93062</id>
    </interactant>
    <interactant intactId="EBI-8583355">
        <id>Q9Y4X0</id>
        <label>AMMECR1</label>
    </interactant>
    <organismsDiffer>false</organismsDiffer>
    <experiments>4</experiments>
</comment>
<comment type="interaction">
    <interactant intactId="EBI-740322">
        <id>Q93062</id>
    </interactant>
    <interactant intactId="EBI-930964">
        <id>P54253</id>
        <label>ATXN1</label>
    </interactant>
    <organismsDiffer>false</organismsDiffer>
    <experiments>6</experiments>
</comment>
<comment type="interaction">
    <interactant intactId="EBI-740322">
        <id>Q93062</id>
    </interactant>
    <interactant intactId="EBI-744695">
        <id>Q8N9N5</id>
        <label>BANP</label>
    </interactant>
    <organismsDiffer>false</organismsDiffer>
    <experiments>3</experiments>
</comment>
<comment type="interaction">
    <interactant intactId="EBI-740322">
        <id>Q93062</id>
    </interactant>
    <interactant intactId="EBI-748297">
        <id>Q9BXC9</id>
        <label>BBS2</label>
    </interactant>
    <organismsDiffer>false</organismsDiffer>
    <experiments>3</experiments>
</comment>
<comment type="interaction">
    <interactant intactId="EBI-740322">
        <id>Q93062</id>
    </interactant>
    <interactant intactId="EBI-10174813">
        <id>A8KA13</id>
        <label>BCL6B</label>
    </interactant>
    <organismsDiffer>false</organismsDiffer>
    <experiments>3</experiments>
</comment>
<comment type="interaction">
    <interactant intactId="EBI-740322">
        <id>Q93062</id>
    </interactant>
    <interactant intactId="EBI-711810">
        <id>O14503</id>
        <label>BHLHE40</label>
    </interactant>
    <organismsDiffer>false</organismsDiffer>
    <experiments>3</experiments>
</comment>
<comment type="interaction">
    <interactant intactId="EBI-740322">
        <id>Q93062</id>
    </interactant>
    <interactant intactId="EBI-998198">
        <id>Q8N9W6</id>
        <label>BOLL</label>
    </interactant>
    <organismsDiffer>false</organismsDiffer>
    <experiments>3</experiments>
</comment>
<comment type="interaction">
    <interactant intactId="EBI-740322">
        <id>Q93062</id>
    </interactant>
    <interactant intactId="EBI-6660291">
        <id>Q6NUJ2</id>
        <label>C11orf87</label>
    </interactant>
    <organismsDiffer>false</organismsDiffer>
    <experiments>3</experiments>
</comment>
<comment type="interaction">
    <interactant intactId="EBI-740322">
        <id>Q93062</id>
    </interactant>
    <interactant intactId="EBI-946029">
        <id>Q6P1W5</id>
        <label>C1orf94</label>
    </interactant>
    <organismsDiffer>false</organismsDiffer>
    <experiments>4</experiments>
</comment>
<comment type="interaction">
    <interactant intactId="EBI-740322">
        <id>Q93062</id>
    </interactant>
    <interactant intactId="EBI-7317823">
        <id>Q6P5X5</id>
        <label>C22orf39</label>
    </interactant>
    <organismsDiffer>false</organismsDiffer>
    <experiments>3</experiments>
</comment>
<comment type="interaction">
    <interactant intactId="EBI-740322">
        <id>Q93062</id>
    </interactant>
    <interactant intactId="EBI-1058722">
        <id>Q13554</id>
        <label>CAMK2B</label>
    </interactant>
    <organismsDiffer>false</organismsDiffer>
    <experiments>3</experiments>
</comment>
<comment type="interaction">
    <interactant intactId="EBI-740322">
        <id>Q93062</id>
    </interactant>
    <interactant intactId="EBI-3905829">
        <id>P51959</id>
        <label>CCNG1</label>
    </interactant>
    <organismsDiffer>false</organismsDiffer>
    <experiments>3</experiments>
</comment>
<comment type="interaction">
    <interactant intactId="EBI-740322">
        <id>Q93062</id>
    </interactant>
    <interactant intactId="EBI-739806">
        <id>O75909</id>
        <label>CCNK</label>
    </interactant>
    <organismsDiffer>false</organismsDiffer>
    <experiments>4</experiments>
</comment>
<comment type="interaction">
    <interactant intactId="EBI-740322">
        <id>Q93062</id>
    </interactant>
    <interactant intactId="EBI-396137">
        <id>Q9UJX2</id>
        <label>CDC23</label>
    </interactant>
    <organismsDiffer>false</organismsDiffer>
    <experiments>4</experiments>
</comment>
<comment type="interaction">
    <interactant intactId="EBI-740322">
        <id>Q93062</id>
    </interactant>
    <interactant intactId="EBI-2510250">
        <id>Q96SW2</id>
        <label>CRBN</label>
    </interactant>
    <organismsDiffer>false</organismsDiffer>
    <experiments>3</experiments>
</comment>
<comment type="interaction">
    <interactant intactId="EBI-740322">
        <id>Q93062</id>
    </interactant>
    <interactant intactId="EBI-10192698">
        <id>Q02930-3</id>
        <label>CREB5</label>
    </interactant>
    <organismsDiffer>false</organismsDiffer>
    <experiments>3</experiments>
</comment>
<comment type="interaction">
    <interactant intactId="EBI-740322">
        <id>Q93062</id>
    </interactant>
    <interactant intactId="EBI-7043337">
        <id>P05813</id>
        <label>CRYBA1</label>
    </interactant>
    <organismsDiffer>false</organismsDiffer>
    <experiments>3</experiments>
</comment>
<comment type="interaction">
    <interactant intactId="EBI-740322">
        <id>Q93062</id>
    </interactant>
    <interactant intactId="EBI-2602175">
        <id>P07498</id>
        <label>CSN3</label>
    </interactant>
    <organismsDiffer>false</organismsDiffer>
    <experiments>4</experiments>
</comment>
<comment type="interaction">
    <interactant intactId="EBI-740322">
        <id>Q93062</id>
    </interactant>
    <interactant intactId="EBI-724310">
        <id>Q15038</id>
        <label>DAZAP2</label>
    </interactant>
    <organismsDiffer>false</organismsDiffer>
    <experiments>6</experiments>
</comment>
<comment type="interaction">
    <interactant intactId="EBI-740322">
        <id>Q93062</id>
    </interactant>
    <interactant intactId="EBI-740686">
        <id>Q5TAQ9</id>
        <label>DCAF8</label>
    </interactant>
    <organismsDiffer>false</organismsDiffer>
    <experiments>3</experiments>
</comment>
<comment type="interaction">
    <interactant intactId="EBI-740322">
        <id>Q93062</id>
    </interactant>
    <interactant intactId="EBI-10173222">
        <id>A2VCK2</id>
        <label>DCDC2B</label>
    </interactant>
    <organismsDiffer>false</organismsDiffer>
    <experiments>3</experiments>
</comment>
<comment type="interaction">
    <interactant intactId="EBI-740322">
        <id>Q93062</id>
    </interactant>
    <interactant intactId="EBI-747324">
        <id>Q9BTE1</id>
        <label>DCTN5</label>
    </interactant>
    <organismsDiffer>false</organismsDiffer>
    <experiments>3</experiments>
</comment>
<comment type="interaction">
    <interactant intactId="EBI-740322">
        <id>Q93062</id>
    </interactant>
    <interactant intactId="EBI-9679045">
        <id>Q9NQL9</id>
        <label>DMRT3</label>
    </interactant>
    <organismsDiffer>false</organismsDiffer>
    <experiments>3</experiments>
</comment>
<comment type="interaction">
    <interactant intactId="EBI-740322">
        <id>Q93062</id>
    </interactant>
    <interactant intactId="EBI-2834978">
        <id>Q7L591</id>
        <label>DOK3</label>
    </interactant>
    <organismsDiffer>false</organismsDiffer>
    <experiments>3</experiments>
</comment>
<comment type="interaction">
    <interactant intactId="EBI-740322">
        <id>Q93062</id>
    </interactant>
    <interactant intactId="EBI-2880244">
        <id>Q6PKX4</id>
        <label>DOK6</label>
    </interactant>
    <organismsDiffer>false</organismsDiffer>
    <experiments>3</experiments>
</comment>
<comment type="interaction">
    <interactant intactId="EBI-740322">
        <id>Q93062</id>
    </interactant>
    <interactant intactId="EBI-719542">
        <id>O14531</id>
        <label>DPYSL4</label>
    </interactant>
    <organismsDiffer>false</organismsDiffer>
    <experiments>3</experiments>
</comment>
<comment type="interaction">
    <interactant intactId="EBI-740322">
        <id>Q93062</id>
    </interactant>
    <interactant intactId="EBI-740376">
        <id>Q86UW9</id>
        <label>DTX2</label>
    </interactant>
    <organismsDiffer>false</organismsDiffer>
    <experiments>7</experiments>
</comment>
<comment type="interaction">
    <interactant intactId="EBI-740322">
        <id>Q93062</id>
    </interactant>
    <interactant intactId="EBI-743414">
        <id>O95967</id>
        <label>EFEMP2</label>
    </interactant>
    <organismsDiffer>false</organismsDiffer>
    <experiments>3</experiments>
</comment>
<comment type="interaction">
    <interactant intactId="EBI-740322">
        <id>Q93062</id>
    </interactant>
    <interactant intactId="EBI-741626">
        <id>Q9H5Z6</id>
        <label>FAM124B</label>
    </interactant>
    <organismsDiffer>false</organismsDiffer>
    <experiments>3</experiments>
</comment>
<comment type="interaction">
    <interactant intactId="EBI-740322">
        <id>Q93062</id>
    </interactant>
    <interactant intactId="EBI-7957930">
        <id>Q92567</id>
        <label>FAM168A</label>
    </interactant>
    <organismsDiffer>false</organismsDiffer>
    <experiments>5</experiments>
</comment>
<comment type="interaction">
    <interactant intactId="EBI-740322">
        <id>Q93062</id>
    </interactant>
    <interactant intactId="EBI-10244131">
        <id>Q8TES7-6</id>
        <label>FBF1</label>
    </interactant>
    <organismsDiffer>false</organismsDiffer>
    <experiments>3</experiments>
</comment>
<comment type="interaction">
    <interactant intactId="EBI-740322">
        <id>Q93062</id>
    </interactant>
    <interactant intactId="EBI-744419">
        <id>Q96D16</id>
        <label>FBXL18</label>
    </interactant>
    <organismsDiffer>false</organismsDiffer>
    <experiments>3</experiments>
</comment>
<comment type="interaction">
    <interactant intactId="EBI-740322">
        <id>Q93062</id>
    </interactant>
    <interactant intactId="EBI-744935">
        <id>Q9BVV2</id>
        <label>FNDC11</label>
    </interactant>
    <organismsDiffer>false</organismsDiffer>
    <experiments>3</experiments>
</comment>
<comment type="interaction">
    <interactant intactId="EBI-740322">
        <id>Q93062</id>
    </interactant>
    <interactant intactId="EBI-3956892">
        <id>Q99958</id>
        <label>FOXC2</label>
    </interactant>
    <organismsDiffer>false</organismsDiffer>
    <experiments>3</experiments>
</comment>
<comment type="interaction">
    <interactant intactId="EBI-740322">
        <id>Q93062</id>
    </interactant>
    <interactant intactId="EBI-983719">
        <id>Q9BZS1</id>
        <label>FOXP3</label>
    </interactant>
    <organismsDiffer>false</organismsDiffer>
    <experiments>6</experiments>
</comment>
<comment type="interaction">
    <interactant intactId="EBI-740322">
        <id>Q93062</id>
    </interactant>
    <interactant intactId="EBI-10188645">
        <id>O75603</id>
        <label>GCM2</label>
    </interactant>
    <organismsDiffer>false</organismsDiffer>
    <experiments>5</experiments>
</comment>
<comment type="interaction">
    <interactant intactId="EBI-740322">
        <id>Q93062</id>
    </interactant>
    <interactant intactId="EBI-748515">
        <id>Q8IVS8</id>
        <label>GLYCTK</label>
    </interactant>
    <organismsDiffer>false</organismsDiffer>
    <experiments>3</experiments>
</comment>
<comment type="interaction">
    <interactant intactId="EBI-740322">
        <id>Q93062</id>
    </interactant>
    <interactant intactId="EBI-5666657">
        <id>Q9NWQ4</id>
        <label>GPATCH2L</label>
    </interactant>
    <organismsDiffer>false</organismsDiffer>
    <experiments>3</experiments>
</comment>
<comment type="interaction">
    <interactant intactId="EBI-740322">
        <id>Q93062</id>
    </interactant>
    <interactant intactId="EBI-713355">
        <id>Q13227</id>
        <label>GPS2</label>
    </interactant>
    <organismsDiffer>false</organismsDiffer>
    <experiments>3</experiments>
</comment>
<comment type="interaction">
    <interactant intactId="EBI-740322">
        <id>Q93062</id>
    </interactant>
    <interactant intactId="EBI-2847510">
        <id>Q13588</id>
        <label>GRAP</label>
    </interactant>
    <organismsDiffer>false</organismsDiffer>
    <experiments>3</experiments>
</comment>
<comment type="interaction">
    <interactant intactId="EBI-740322">
        <id>Q93062</id>
    </interactant>
    <interactant intactId="EBI-372619">
        <id>Q14687</id>
        <label>GSE1</label>
    </interactant>
    <organismsDiffer>false</organismsDiffer>
    <experiments>3</experiments>
</comment>
<comment type="interaction">
    <interactant intactId="EBI-740322">
        <id>Q93062</id>
    </interactant>
    <interactant intactId="EBI-7399002">
        <id>B4DNA4</id>
        <label>hCG_20425</label>
    </interactant>
    <organismsDiffer>false</organismsDiffer>
    <experiments>3</experiments>
</comment>
<comment type="interaction">
    <interactant intactId="EBI-740322">
        <id>Q93062</id>
    </interactant>
    <interactant intactId="EBI-750630">
        <id>Q9UBP5</id>
        <label>HEY2</label>
    </interactant>
    <organismsDiffer>false</organismsDiffer>
    <experiments>3</experiments>
</comment>
<comment type="interaction">
    <interactant intactId="EBI-740322">
        <id>Q93062</id>
    </interactant>
    <interactant intactId="EBI-751092">
        <id>Q9NQ87</id>
        <label>HEYL</label>
    </interactant>
    <organismsDiffer>false</organismsDiffer>
    <experiments>4</experiments>
</comment>
<comment type="interaction">
    <interactant intactId="EBI-740322">
        <id>Q93062</id>
    </interactant>
    <interactant intactId="EBI-535849">
        <id>Q8WVV9</id>
        <label>HNRNPLL</label>
    </interactant>
    <organismsDiffer>false</organismsDiffer>
    <experiments>3</experiments>
</comment>
<comment type="interaction">
    <interactant intactId="EBI-740322">
        <id>Q93062</id>
    </interactant>
    <interactant intactId="EBI-740785">
        <id>P49639</id>
        <label>HOXA1</label>
    </interactant>
    <organismsDiffer>false</organismsDiffer>
    <experiments>3</experiments>
</comment>
<comment type="interaction">
    <interactant intactId="EBI-740322">
        <id>Q93062</id>
    </interactant>
    <interactant intactId="EBI-7178764">
        <id>P01344</id>
        <label>IGF2</label>
    </interactant>
    <organismsDiffer>false</organismsDiffer>
    <experiments>3</experiments>
</comment>
<comment type="interaction">
    <interactant intactId="EBI-740322">
        <id>Q93062</id>
    </interactant>
    <interactant intactId="EBI-743980">
        <id>Q9NXX0</id>
        <label>ILF3</label>
    </interactant>
    <organismsDiffer>false</organismsDiffer>
    <experiments>3</experiments>
</comment>
<comment type="interaction">
    <interactant intactId="EBI-740322">
        <id>Q93062</id>
    </interactant>
    <interactant intactId="EBI-6509505">
        <id>Q0VD86</id>
        <label>INCA1</label>
    </interactant>
    <organismsDiffer>false</organismsDiffer>
    <experiments>3</experiments>
</comment>
<comment type="interaction">
    <interactant intactId="EBI-740322">
        <id>Q93062</id>
    </interactant>
    <interactant intactId="EBI-2881520">
        <id>Q9NRY2</id>
        <label>INIP</label>
    </interactant>
    <organismsDiffer>false</organismsDiffer>
    <experiments>4</experiments>
</comment>
<comment type="interaction">
    <interactant intactId="EBI-740322">
        <id>Q93062</id>
    </interactant>
    <interactant intactId="EBI-747509">
        <id>Q9UHH9</id>
        <label>IP6K2</label>
    </interactant>
    <organismsDiffer>false</organismsDiffer>
    <experiments>3</experiments>
</comment>
<comment type="interaction">
    <interactant intactId="EBI-740322">
        <id>Q93062</id>
    </interactant>
    <interactant intactId="EBI-4397613">
        <id>Q7L273</id>
        <label>KCTD9</label>
    </interactant>
    <organismsDiffer>false</organismsDiffer>
    <experiments>3</experiments>
</comment>
<comment type="interaction">
    <interactant intactId="EBI-740322">
        <id>Q93062</id>
    </interactant>
    <interactant intactId="EBI-10288524">
        <id>Q96HR4</id>
        <label>KIAA1305</label>
    </interactant>
    <organismsDiffer>false</organismsDiffer>
    <experiments>3</experiments>
</comment>
<comment type="interaction">
    <interactant intactId="EBI-740322">
        <id>Q93062</id>
    </interactant>
    <interactant intactId="EBI-10294579">
        <id>Q99706</id>
        <label>KIR2DL4</label>
    </interactant>
    <organismsDiffer>false</organismsDiffer>
    <experiments>3</experiments>
</comment>
<comment type="interaction">
    <interactant intactId="EBI-740322">
        <id>Q93062</id>
    </interactant>
    <interactant intactId="EBI-349938">
        <id>P52292</id>
        <label>KPNA2</label>
    </interactant>
    <organismsDiffer>false</organismsDiffer>
    <experiments>3</experiments>
</comment>
<comment type="interaction">
    <interactant intactId="EBI-740322">
        <id>Q93062</id>
    </interactant>
    <interactant intactId="EBI-10176379">
        <id>P59991</id>
        <label>KRTAP12-2</label>
    </interactant>
    <organismsDiffer>false</organismsDiffer>
    <experiments>3</experiments>
</comment>
<comment type="interaction">
    <interactant intactId="EBI-740322">
        <id>Q93062</id>
    </interactant>
    <interactant intactId="EBI-1048945">
        <id>Q3LI72</id>
        <label>KRTAP19-5</label>
    </interactant>
    <organismsDiffer>false</organismsDiffer>
    <experiments>4</experiments>
</comment>
<comment type="interaction">
    <interactant intactId="EBI-740322">
        <id>Q93062</id>
    </interactant>
    <interactant intactId="EBI-10241353">
        <id>Q3SYF9</id>
        <label>KRTAP19-7</label>
    </interactant>
    <organismsDiffer>false</organismsDiffer>
    <experiments>3</experiments>
</comment>
<comment type="interaction">
    <interactant intactId="EBI-740322">
        <id>Q93062</id>
    </interactant>
    <interactant intactId="EBI-10171734">
        <id>A1A580</id>
        <label>KRTAP23-1</label>
    </interactant>
    <organismsDiffer>false</organismsDiffer>
    <experiments>3</experiments>
</comment>
<comment type="interaction">
    <interactant intactId="EBI-740322">
        <id>Q93062</id>
    </interactant>
    <interactant intactId="EBI-10261141">
        <id>Q8IUC2</id>
        <label>KRTAP8-1</label>
    </interactant>
    <organismsDiffer>false</organismsDiffer>
    <experiments>3</experiments>
</comment>
<comment type="interaction">
    <interactant intactId="EBI-740322">
        <id>Q93062</id>
    </interactant>
    <interactant intactId="EBI-9088829">
        <id>Q6DKI2</id>
        <label>LGALS9C</label>
    </interactant>
    <organismsDiffer>false</organismsDiffer>
    <experiments>3</experiments>
</comment>
<comment type="interaction">
    <interactant intactId="EBI-740322">
        <id>Q93062</id>
    </interactant>
    <interactant intactId="EBI-10267998">
        <id>Q8N8I6</id>
        <label>LINC00482</label>
    </interactant>
    <organismsDiffer>false</organismsDiffer>
    <experiments>3</experiments>
</comment>
<comment type="interaction">
    <interactant intactId="EBI-740322">
        <id>Q93062</id>
    </interactant>
    <interactant intactId="EBI-10039207">
        <id>Q9Y4M8</id>
        <label>LINC00588</label>
    </interactant>
    <organismsDiffer>false</organismsDiffer>
    <experiments>3</experiments>
</comment>
<comment type="interaction">
    <interactant intactId="EBI-740322">
        <id>Q93062</id>
    </interactant>
    <interactant intactId="EBI-2798728">
        <id>P61968</id>
        <label>LMO4</label>
    </interactant>
    <organismsDiffer>false</organismsDiffer>
    <experiments>3</experiments>
</comment>
<comment type="interaction">
    <interactant intactId="EBI-740322">
        <id>Q93062</id>
    </interactant>
    <interactant intactId="EBI-2341787">
        <id>Q17RB8</id>
        <label>LONRF1</label>
    </interactant>
    <organismsDiffer>false</organismsDiffer>
    <experiments>3</experiments>
</comment>
<comment type="interaction">
    <interactant intactId="EBI-740322">
        <id>Q93062</id>
    </interactant>
    <interactant intactId="EBI-716006">
        <id>Q9Y5V3</id>
        <label>MAGED1</label>
    </interactant>
    <organismsDiffer>false</organismsDiffer>
    <experiments>3</experiments>
</comment>
<comment type="interaction">
    <interactant intactId="EBI-740322">
        <id>Q93062</id>
    </interactant>
    <interactant intactId="EBI-10175425">
        <id>B1AHB0</id>
        <label>MCM5</label>
    </interactant>
    <organismsDiffer>false</organismsDiffer>
    <experiments>3</experiments>
</comment>
<comment type="interaction">
    <interactant intactId="EBI-740322">
        <id>Q93062</id>
    </interactant>
    <interactant intactId="EBI-746712">
        <id>Q9NPC6</id>
        <label>MYOZ2</label>
    </interactant>
    <organismsDiffer>false</organismsDiffer>
    <experiments>3</experiments>
</comment>
<comment type="interaction">
    <interactant intactId="EBI-740322">
        <id>Q93062</id>
    </interactant>
    <interactant intactId="EBI-10254872">
        <id>Q6XQN6</id>
        <label>NAPRT</label>
    </interactant>
    <organismsDiffer>false</organismsDiffer>
    <experiments>3</experiments>
</comment>
<comment type="interaction">
    <interactant intactId="EBI-740322">
        <id>Q93062</id>
    </interactant>
    <interactant intactId="EBI-10254820">
        <id>Q6XQN6-2</id>
        <label>NAPRT</label>
    </interactant>
    <organismsDiffer>false</organismsDiffer>
    <experiments>3</experiments>
</comment>
<comment type="interaction">
    <interactant intactId="EBI-740322">
        <id>Q93062</id>
    </interactant>
    <interactant intactId="EBI-2108053">
        <id>Q14511</id>
        <label>NEDD9</label>
    </interactant>
    <organismsDiffer>false</organismsDiffer>
    <experiments>3</experiments>
</comment>
<comment type="interaction">
    <interactant intactId="EBI-740322">
        <id>Q93062</id>
    </interactant>
    <interactant intactId="EBI-10250949">
        <id>Q6NSM0</id>
        <label>NR1D2</label>
    </interactant>
    <organismsDiffer>false</organismsDiffer>
    <experiments>4</experiments>
</comment>
<comment type="interaction">
    <interactant intactId="EBI-740322">
        <id>Q93062</id>
    </interactant>
    <interactant intactId="EBI-741158">
        <id>Q96HA8</id>
        <label>NTAQ1</label>
    </interactant>
    <organismsDiffer>false</organismsDiffer>
    <experiments>3</experiments>
</comment>
<comment type="interaction">
    <interactant intactId="EBI-740322">
        <id>Q93062</id>
    </interactant>
    <interactant intactId="EBI-740446">
        <id>P32242</id>
        <label>OTX1</label>
    </interactant>
    <organismsDiffer>false</organismsDiffer>
    <experiments>4</experiments>
</comment>
<comment type="interaction">
    <interactant intactId="EBI-740322">
        <id>Q93062</id>
    </interactant>
    <interactant intactId="EBI-10178671">
        <id>J3QSH9</id>
        <label>PER1</label>
    </interactant>
    <organismsDiffer>false</organismsDiffer>
    <experiments>3</experiments>
</comment>
<comment type="interaction">
    <interactant intactId="EBI-740322">
        <id>Q93062</id>
    </interactant>
    <interactant intactId="EBI-10250187">
        <id>Q6IN51</id>
        <label>PER1</label>
    </interactant>
    <organismsDiffer>false</organismsDiffer>
    <experiments>3</experiments>
</comment>
<comment type="interaction">
    <interactant intactId="EBI-740322">
        <id>Q93062</id>
    </interactant>
    <interactant intactId="EBI-530034">
        <id>O43189</id>
        <label>PHF1</label>
    </interactant>
    <organismsDiffer>false</organismsDiffer>
    <experiments>4</experiments>
</comment>
<comment type="interaction">
    <interactant intactId="EBI-740322">
        <id>Q93062</id>
    </interactant>
    <interactant intactId="EBI-357318">
        <id>Q9NWS0</id>
        <label>PIH1D1</label>
    </interactant>
    <organismsDiffer>false</organismsDiffer>
    <experiments>3</experiments>
</comment>
<comment type="interaction">
    <interactant intactId="EBI-740322">
        <id>Q93062</id>
    </interactant>
    <interactant intactId="EBI-714158">
        <id>Q13526</id>
        <label>PIN1</label>
    </interactant>
    <organismsDiffer>false</organismsDiffer>
    <experiments>4</experiments>
</comment>
<comment type="interaction">
    <interactant intactId="EBI-740322">
        <id>Q93062</id>
    </interactant>
    <interactant intactId="EBI-748265">
        <id>P78337</id>
        <label>PITX1</label>
    </interactant>
    <organismsDiffer>false</organismsDiffer>
    <experiments>6</experiments>
</comment>
<comment type="interaction">
    <interactant intactId="EBI-740322">
        <id>Q93062</id>
    </interactant>
    <interactant intactId="EBI-1389308">
        <id>Q7Z3K3</id>
        <label>POGZ</label>
    </interactant>
    <organismsDiffer>false</organismsDiffer>
    <experiments>3</experiments>
</comment>
<comment type="interaction">
    <interactant intactId="EBI-740322">
        <id>Q93062</id>
    </interactant>
    <interactant intactId="EBI-739990">
        <id>Q96HA1</id>
        <label>POM121</label>
    </interactant>
    <organismsDiffer>false</organismsDiffer>
    <experiments>4</experiments>
</comment>
<comment type="interaction">
    <interactant intactId="EBI-740322">
        <id>Q93062</id>
    </interactant>
    <interactant intactId="EBI-10196507">
        <id>P09565</id>
        <label>PP9974</label>
    </interactant>
    <organismsDiffer>false</organismsDiffer>
    <experiments>3</experiments>
</comment>
<comment type="interaction">
    <interactant intactId="EBI-740322">
        <id>Q93062</id>
    </interactant>
    <interactant intactId="EBI-1181405">
        <id>Q13131</id>
        <label>PRKAA1</label>
    </interactant>
    <organismsDiffer>false</organismsDiffer>
    <experiments>3</experiments>
</comment>
<comment type="interaction">
    <interactant intactId="EBI-740322">
        <id>Q93062</id>
    </interactant>
    <interactant intactId="EBI-1383852">
        <id>P54646</id>
        <label>PRKAA2</label>
    </interactant>
    <organismsDiffer>false</organismsDiffer>
    <experiments>3</experiments>
</comment>
<comment type="interaction">
    <interactant intactId="EBI-740322">
        <id>Q93062</id>
    </interactant>
    <interactant intactId="EBI-10172814">
        <id>P86479</id>
        <label>PRR20C</label>
    </interactant>
    <organismsDiffer>false</organismsDiffer>
    <experiments>3</experiments>
</comment>
<comment type="interaction">
    <interactant intactId="EBI-740322">
        <id>Q93062</id>
    </interactant>
    <interactant intactId="EBI-945792">
        <id>Q96PU8</id>
        <label>QKI</label>
    </interactant>
    <organismsDiffer>false</organismsDiffer>
    <experiments>5</experiments>
</comment>
<comment type="interaction">
    <interactant intactId="EBI-740322">
        <id>Q93062</id>
    </interactant>
    <interactant intactId="EBI-10326419">
        <id>Q9Y2K5-2</id>
        <label>R3HDM2</label>
    </interactant>
    <organismsDiffer>false</organismsDiffer>
    <experiments>3</experiments>
</comment>
<comment type="interaction">
    <interactant intactId="EBI-740322">
        <id>Q93062</id>
    </interactant>
    <interactant intactId="EBI-945906">
        <id>Q9NWB1</id>
        <label>RBFOX1</label>
    </interactant>
    <organismsDiffer>false</organismsDiffer>
    <experiments>3</experiments>
</comment>
<comment type="interaction">
    <interactant intactId="EBI-740322">
        <id>Q93062</id>
    </interactant>
    <interactant intactId="EBI-746056">
        <id>O43251</id>
        <label>RBFOX2</label>
    </interactant>
    <organismsDiffer>false</organismsDiffer>
    <experiments>3</experiments>
</comment>
<comment type="interaction">
    <interactant intactId="EBI-740322">
        <id>Q93062</id>
    </interactant>
    <interactant intactId="EBI-3916363">
        <id>Q96NR8</id>
        <label>RDH12</label>
    </interactant>
    <organismsDiffer>false</organismsDiffer>
    <experiments>3</experiments>
</comment>
<comment type="interaction">
    <interactant intactId="EBI-740322">
        <id>Q93062</id>
    </interactant>
    <interactant intactId="EBI-2367123">
        <id>O94955</id>
        <label>RHOBTB3</label>
    </interactant>
    <organismsDiffer>false</organismsDiffer>
    <experiments>4</experiments>
</comment>
<comment type="interaction">
    <interactant intactId="EBI-740322">
        <id>Q93062</id>
    </interactant>
    <interactant intactId="EBI-372094">
        <id>Q9BQY4</id>
        <label>RHOXF2</label>
    </interactant>
    <organismsDiffer>false</organismsDiffer>
    <experiments>6</experiments>
</comment>
<comment type="interaction">
    <interactant intactId="EBI-740322">
        <id>Q93062</id>
    </interactant>
    <interactant intactId="EBI-10226430">
        <id>Q0D2K3</id>
        <label>RIPPLY1</label>
    </interactant>
    <organismsDiffer>false</organismsDiffer>
    <experiments>3</experiments>
</comment>
<comment type="interaction">
    <interactant intactId="EBI-740322">
        <id>Q93062</id>
    </interactant>
    <interactant intactId="EBI-10172778">
        <id>A1L4F5</id>
        <label>ROR2</label>
    </interactant>
    <organismsDiffer>false</organismsDiffer>
    <experiments>3</experiments>
</comment>
<comment type="interaction">
    <interactant intactId="EBI-740322">
        <id>Q93062</id>
    </interactant>
    <interactant intactId="EBI-10217913">
        <id>Q14D33</id>
        <label>RTP5</label>
    </interactant>
    <organismsDiffer>false</organismsDiffer>
    <experiments>3</experiments>
</comment>
<comment type="interaction">
    <interactant intactId="EBI-740322">
        <id>Q93062</id>
    </interactant>
    <interactant intactId="EBI-6257312">
        <id>Q9BVN2</id>
        <label>RUSC1</label>
    </interactant>
    <organismsDiffer>false</organismsDiffer>
    <experiments>4</experiments>
</comment>
<comment type="interaction">
    <interactant intactId="EBI-740322">
        <id>Q93062</id>
    </interactant>
    <interactant intactId="EBI-2683289">
        <id>Q86WG5</id>
        <label>SBF2</label>
    </interactant>
    <organismsDiffer>false</organismsDiffer>
    <experiments>3</experiments>
</comment>
<comment type="interaction">
    <interactant intactId="EBI-740322">
        <id>Q93062</id>
    </interactant>
    <interactant intactId="EBI-9089805">
        <id>Q9NTN9-3</id>
        <label>SEMA4G</label>
    </interactant>
    <organismsDiffer>false</organismsDiffer>
    <experiments>3</experiments>
</comment>
<comment type="interaction">
    <interactant intactId="EBI-740322">
        <id>Q93062</id>
    </interactant>
    <interactant intactId="EBI-10225873">
        <id>Q08AM8</id>
        <label>SH3RF2</label>
    </interactant>
    <organismsDiffer>false</organismsDiffer>
    <experiments>3</experiments>
</comment>
<comment type="interaction">
    <interactant intactId="EBI-740322">
        <id>Q93062</id>
    </interactant>
    <interactant intactId="EBI-10179231">
        <id>O00241-2</id>
        <label>SIRPB1</label>
    </interactant>
    <organismsDiffer>false</organismsDiffer>
    <experiments>3</experiments>
</comment>
<comment type="interaction">
    <interactant intactId="EBI-740322">
        <id>Q93062</id>
    </interactant>
    <interactant intactId="EBI-749970">
        <id>Q53HV7</id>
        <label>SMUG1</label>
    </interactant>
    <organismsDiffer>false</organismsDiffer>
    <experiments>2</experiments>
</comment>
<comment type="interaction">
    <interactant intactId="EBI-740322">
        <id>Q93062</id>
    </interactant>
    <interactant intactId="EBI-372475">
        <id>P14678-2</id>
        <label>SNRPB</label>
    </interactant>
    <organismsDiffer>false</organismsDiffer>
    <experiments>3</experiments>
</comment>
<comment type="interaction">
    <interactant intactId="EBI-740322">
        <id>Q93062</id>
    </interactant>
    <interactant intactId="EBI-10246938">
        <id>Q5TAL4</id>
        <label>SNRPC</label>
    </interactant>
    <organismsDiffer>false</organismsDiffer>
    <experiments>3</experiments>
</comment>
<comment type="interaction">
    <interactant intactId="EBI-740322">
        <id>Q93062</id>
    </interactant>
    <interactant intactId="EBI-750105">
        <id>Q5T0L3</id>
        <label>SPATA46</label>
    </interactant>
    <organismsDiffer>false</organismsDiffer>
    <experiments>3</experiments>
</comment>
<comment type="interaction">
    <interactant intactId="EBI-740322">
        <id>Q93062</id>
    </interactant>
    <interactant intactId="EBI-8635958">
        <id>Q6RVD6</id>
        <label>SPATA8</label>
    </interactant>
    <organismsDiffer>false</organismsDiffer>
    <experiments>4</experiments>
</comment>
<comment type="interaction">
    <interactant intactId="EBI-740322">
        <id>Q93062</id>
    </interactant>
    <interactant intactId="EBI-717201">
        <id>Q9UQ90</id>
        <label>SPG7</label>
    </interactant>
    <organismsDiffer>false</organismsDiffer>
    <experiments>3</experiments>
</comment>
<comment type="interaction">
    <interactant intactId="EBI-740322">
        <id>Q93062</id>
    </interactant>
    <interactant intactId="EBI-10269322">
        <id>Q8NCR6</id>
        <label>SPMIP6</label>
    </interactant>
    <organismsDiffer>false</organismsDiffer>
    <experiments>3</experiments>
</comment>
<comment type="interaction">
    <interactant intactId="EBI-740322">
        <id>Q93062</id>
    </interactant>
    <interactant intactId="EBI-743976">
        <id>Q96LM6</id>
        <label>SPMIP9</label>
    </interactant>
    <organismsDiffer>false</organismsDiffer>
    <experiments>4</experiments>
</comment>
<comment type="interaction">
    <interactant intactId="EBI-740322">
        <id>Q93062</id>
    </interactant>
    <interactant intactId="EBI-740355">
        <id>Q96SI9</id>
        <label>STRBP</label>
    </interactant>
    <organismsDiffer>false</organismsDiffer>
    <experiments>4</experiments>
</comment>
<comment type="interaction">
    <interactant intactId="EBI-740322">
        <id>Q93062</id>
    </interactant>
    <interactant intactId="EBI-2824328">
        <id>O95947</id>
        <label>TBX6</label>
    </interactant>
    <organismsDiffer>false</organismsDiffer>
    <experiments>3</experiments>
</comment>
<comment type="interaction">
    <interactant intactId="EBI-740322">
        <id>Q93062</id>
    </interactant>
    <interactant intactId="EBI-2802204">
        <id>Q6PIY7</id>
        <label>TENT2</label>
    </interactant>
    <organismsDiffer>false</organismsDiffer>
    <experiments>3</experiments>
</comment>
<comment type="interaction">
    <interactant intactId="EBI-740322">
        <id>Q93062</id>
    </interactant>
    <interactant intactId="EBI-357061">
        <id>Q92734</id>
        <label>TFG</label>
    </interactant>
    <organismsDiffer>false</organismsDiffer>
    <experiments>3</experiments>
</comment>
<comment type="interaction">
    <interactant intactId="EBI-740322">
        <id>Q93062</id>
    </interactant>
    <interactant intactId="EBI-2256865">
        <id>P35590</id>
        <label>TIE1</label>
    </interactant>
    <organismsDiffer>false</organismsDiffer>
    <experiments>3</experiments>
</comment>
<comment type="interaction">
    <interactant intactId="EBI-740322">
        <id>Q93062</id>
    </interactant>
    <interactant intactId="EBI-10303636">
        <id>Q9GZM7-3</id>
        <label>TINAGL1</label>
    </interactant>
    <organismsDiffer>false</organismsDiffer>
    <experiments>3</experiments>
</comment>
<comment type="interaction">
    <interactant intactId="EBI-740322">
        <id>Q93062</id>
    </interactant>
    <interactant intactId="EBI-717810">
        <id>Q08117</id>
        <label>TLE5</label>
    </interactant>
    <organismsDiffer>false</organismsDiffer>
    <experiments>3</experiments>
</comment>
<comment type="interaction">
    <interactant intactId="EBI-740322">
        <id>Q93062</id>
    </interactant>
    <interactant intactId="EBI-10226570">
        <id>Q0P5Q0</id>
        <label>TMSB4X</label>
    </interactant>
    <organismsDiffer>false</organismsDiffer>
    <experiments>3</experiments>
</comment>
<comment type="interaction">
    <interactant intactId="EBI-740322">
        <id>Q93062</id>
    </interactant>
    <interactant intactId="EBI-10249783">
        <id>Q6FIE9</id>
        <label>TOLLIP</label>
    </interactant>
    <organismsDiffer>false</organismsDiffer>
    <experiments>3</experiments>
</comment>
<comment type="interaction">
    <interactant intactId="EBI-740322">
        <id>Q93062</id>
    </interactant>
    <interactant intactId="EBI-74615">
        <id>Q9H0E2</id>
        <label>TOLLIP</label>
    </interactant>
    <organismsDiffer>false</organismsDiffer>
    <experiments>4</experiments>
</comment>
<comment type="interaction">
    <interactant intactId="EBI-740322">
        <id>Q93062</id>
    </interactant>
    <interactant intactId="EBI-2510146">
        <id>Q9H496</id>
        <label>TOR1AIP2</label>
    </interactant>
    <organismsDiffer>false</organismsDiffer>
    <experiments>3</experiments>
</comment>
<comment type="interaction">
    <interactant intactId="EBI-740322">
        <id>Q93062</id>
    </interactant>
    <interactant intactId="EBI-7844656">
        <id>Q6ZVT0</id>
        <label>TTLL10</label>
    </interactant>
    <organismsDiffer>false</organismsDiffer>
    <experiments>3</experiments>
</comment>
<comment type="interaction">
    <interactant intactId="EBI-740322">
        <id>Q93062</id>
    </interactant>
    <interactant intactId="EBI-1052725">
        <id>O75896</id>
        <label>TUSC2</label>
    </interactant>
    <organismsDiffer>false</organismsDiffer>
    <experiments>4</experiments>
</comment>
<comment type="interaction">
    <interactant intactId="EBI-740322">
        <id>Q93062</id>
    </interactant>
    <interactant intactId="EBI-10191303">
        <id>O95231</id>
        <label>VENTX</label>
    </interactant>
    <organismsDiffer>false</organismsDiffer>
    <experiments>4</experiments>
</comment>
<comment type="interaction">
    <interactant intactId="EBI-740322">
        <id>Q93062</id>
    </interactant>
    <interactant intactId="EBI-10254232">
        <id>Q6RSH7</id>
        <label>VHLL</label>
    </interactant>
    <organismsDiffer>false</organismsDiffer>
    <experiments>3</experiments>
</comment>
<comment type="interaction">
    <interactant intactId="EBI-740322">
        <id>Q93062</id>
    </interactant>
    <interactant intactId="EBI-2559305">
        <id>A5D8V6</id>
        <label>VPS37C</label>
    </interactant>
    <organismsDiffer>false</organismsDiffer>
    <experiments>3</experiments>
</comment>
<comment type="interaction">
    <interactant intactId="EBI-740322">
        <id>Q93062</id>
    </interactant>
    <interactant intactId="EBI-9478492">
        <id>Q96KV7</id>
        <label>WDR90</label>
    </interactant>
    <organismsDiffer>false</organismsDiffer>
    <experiments>3</experiments>
</comment>
<comment type="interaction">
    <interactant intactId="EBI-740322">
        <id>Q93062</id>
    </interactant>
    <interactant intactId="EBI-10188476">
        <id>A0A0C4DGF1</id>
        <label>ZBTB32</label>
    </interactant>
    <organismsDiffer>false</organismsDiffer>
    <experiments>5</experiments>
</comment>
<comment type="interaction">
    <interactant intactId="EBI-740322">
        <id>Q93062</id>
    </interactant>
    <interactant intactId="EBI-742550">
        <id>Q96K80</id>
        <label>ZC3H10</label>
    </interactant>
    <organismsDiffer>false</organismsDiffer>
    <experiments>4</experiments>
</comment>
<comment type="interaction">
    <interactant intactId="EBI-740322">
        <id>Q93062</id>
    </interactant>
    <interactant intactId="EBI-8651919">
        <id>Q66K41</id>
        <label>ZNF385C</label>
    </interactant>
    <organismsDiffer>false</organismsDiffer>
    <experiments>3</experiments>
</comment>
<comment type="interaction">
    <interactant intactId="EBI-740322">
        <id>Q93062</id>
    </interactant>
    <interactant intactId="EBI-948288">
        <id>Q96MN9</id>
        <label>ZNF488</label>
    </interactant>
    <organismsDiffer>false</organismsDiffer>
    <experiments>4</experiments>
</comment>
<comment type="interaction">
    <interactant intactId="EBI-740322">
        <id>Q93062</id>
    </interactant>
    <interactant intactId="EBI-745520">
        <id>Q9P0T4</id>
        <label>ZNF581</label>
    </interactant>
    <organismsDiffer>false</organismsDiffer>
    <experiments>4</experiments>
</comment>
<comment type="interaction">
    <interactant intactId="EBI-740322">
        <id>Q93062</id>
    </interactant>
    <interactant intactId="EBI-10175488">
        <id>B2R550</id>
    </interactant>
    <organismsDiffer>false</organismsDiffer>
    <experiments>3</experiments>
</comment>
<comment type="interaction">
    <interactant intactId="EBI-740322">
        <id>Q93062</id>
    </interactant>
    <interactant intactId="EBI-750454">
        <id>Q96EJ4</id>
    </interactant>
    <organismsDiffer>false</organismsDiffer>
    <experiments>3</experiments>
</comment>
<comment type="interaction">
    <interactant intactId="EBI-740322">
        <id>Q93062</id>
    </interactant>
    <interactant intactId="EBI-3957603">
        <id>P09022</id>
        <label>Hoxa1</label>
    </interactant>
    <organismsDiffer>true</organismsDiffer>
    <experiments>3</experiments>
</comment>
<comment type="interaction">
    <interactant intactId="EBI-740343">
        <id>Q93062-3</id>
    </interactant>
    <interactant intactId="EBI-16432404">
        <id>A0A0S2Z645</id>
        <label>ABCF3</label>
    </interactant>
    <organismsDiffer>false</organismsDiffer>
    <experiments>3</experiments>
</comment>
<comment type="interaction">
    <interactant intactId="EBI-740343">
        <id>Q93062-3</id>
    </interactant>
    <interactant intactId="EBI-11976299">
        <id>Q5BKX5-3</id>
        <label>ACTMAP</label>
    </interactant>
    <organismsDiffer>false</organismsDiffer>
    <experiments>3</experiments>
</comment>
<comment type="interaction">
    <interactant intactId="EBI-740343">
        <id>Q93062-3</id>
    </interactant>
    <interactant intactId="EBI-12224467">
        <id>Q9NYG5-2</id>
        <label>ANAPC11</label>
    </interactant>
    <organismsDiffer>false</organismsDiffer>
    <experiments>3</experiments>
</comment>
<comment type="interaction">
    <interactant intactId="EBI-740343">
        <id>Q93062-3</id>
    </interactant>
    <interactant intactId="EBI-16433724">
        <id>A0A0S2Z596</id>
        <label>ANKMY1</label>
    </interactant>
    <organismsDiffer>false</organismsDiffer>
    <experiments>3</experiments>
</comment>
<comment type="interaction">
    <interactant intactId="EBI-740343">
        <id>Q93062-3</id>
    </interactant>
    <interactant intactId="EBI-948603">
        <id>Q03989</id>
        <label>ARID5A</label>
    </interactant>
    <organismsDiffer>false</organismsDiffer>
    <experiments>3</experiments>
</comment>
<comment type="interaction">
    <interactant intactId="EBI-740343">
        <id>Q93062-3</id>
    </interactant>
    <interactant intactId="EBI-930964">
        <id>P54253</id>
        <label>ATXN1</label>
    </interactant>
    <organismsDiffer>false</organismsDiffer>
    <experiments>6</experiments>
</comment>
<comment type="interaction">
    <interactant intactId="EBI-740343">
        <id>Q93062-3</id>
    </interactant>
    <interactant intactId="EBI-946046">
        <id>P54252</id>
        <label>ATXN3</label>
    </interactant>
    <organismsDiffer>false</organismsDiffer>
    <experiments>3</experiments>
</comment>
<comment type="interaction">
    <interactant intactId="EBI-740343">
        <id>Q93062-3</id>
    </interactant>
    <interactant intactId="EBI-12809220">
        <id>Q5SWW7</id>
        <label>C10orf55</label>
    </interactant>
    <organismsDiffer>false</organismsDiffer>
    <experiments>3</experiments>
</comment>
<comment type="interaction">
    <interactant intactId="EBI-740343">
        <id>Q93062-3</id>
    </interactant>
    <interactant intactId="EBI-6660291">
        <id>Q6NUJ2</id>
        <label>C11orf87</label>
    </interactant>
    <organismsDiffer>false</organismsDiffer>
    <experiments>3</experiments>
</comment>
<comment type="interaction">
    <interactant intactId="EBI-740343">
        <id>Q93062-3</id>
    </interactant>
    <interactant intactId="EBI-1383687">
        <id>Q9UQM7</id>
        <label>CAMK2A</label>
    </interactant>
    <organismsDiffer>false</organismsDiffer>
    <experiments>3</experiments>
</comment>
<comment type="interaction">
    <interactant intactId="EBI-740343">
        <id>Q93062-3</id>
    </interactant>
    <interactant intactId="EBI-744556">
        <id>Q96HB5</id>
        <label>CCDC120</label>
    </interactant>
    <organismsDiffer>false</organismsDiffer>
    <experiments>3</experiments>
</comment>
<comment type="interaction">
    <interactant intactId="EBI-740343">
        <id>Q93062-3</id>
    </interactant>
    <interactant intactId="EBI-12155483">
        <id>Q9H1P6</id>
        <label>CIMIP1</label>
    </interactant>
    <organismsDiffer>false</organismsDiffer>
    <experiments>3</experiments>
</comment>
<comment type="interaction">
    <interactant intactId="EBI-740343">
        <id>Q93062-3</id>
    </interactant>
    <interactant intactId="EBI-12160437">
        <id>A8MTA8-2</id>
        <label>CIMIP2B</label>
    </interactant>
    <organismsDiffer>false</organismsDiffer>
    <experiments>6</experiments>
</comment>
<comment type="interaction">
    <interactant intactId="EBI-740343">
        <id>Q93062-3</id>
    </interactant>
    <interactant intactId="EBI-1056029">
        <id>Q16740</id>
        <label>CLPP</label>
    </interactant>
    <organismsDiffer>false</organismsDiffer>
    <experiments>3</experiments>
</comment>
<comment type="interaction">
    <interactant intactId="EBI-740343">
        <id>Q93062-3</id>
    </interactant>
    <interactant intactId="EBI-741032">
        <id>Q8NE01</id>
        <label>CNNM3</label>
    </interactant>
    <organismsDiffer>false</organismsDiffer>
    <experiments>3</experiments>
</comment>
<comment type="interaction">
    <interactant intactId="EBI-740343">
        <id>Q93062-3</id>
    </interactant>
    <interactant intactId="EBI-747133">
        <id>P27658</id>
        <label>COL8A1</label>
    </interactant>
    <organismsDiffer>false</organismsDiffer>
    <experiments>3</experiments>
</comment>
<comment type="interaction">
    <interactant intactId="EBI-740343">
        <id>Q93062-3</id>
    </interactant>
    <interactant intactId="EBI-10192698">
        <id>Q02930-3</id>
        <label>CREB5</label>
    </interactant>
    <organismsDiffer>false</organismsDiffer>
    <experiments>3</experiments>
</comment>
<comment type="interaction">
    <interactant intactId="EBI-740343">
        <id>Q93062-3</id>
    </interactant>
    <interactant intactId="EBI-724310">
        <id>Q15038</id>
        <label>DAZAP2</label>
    </interactant>
    <organismsDiffer>false</organismsDiffer>
    <experiments>7</experiments>
</comment>
<comment type="interaction">
    <interactant intactId="EBI-740343">
        <id>Q93062-3</id>
    </interactant>
    <interactant intactId="EBI-11978259">
        <id>Q92567-2</id>
        <label>FAM168A</label>
    </interactant>
    <organismsDiffer>false</organismsDiffer>
    <experiments>3</experiments>
</comment>
<comment type="interaction">
    <interactant intactId="EBI-740343">
        <id>Q93062-3</id>
    </interactant>
    <interactant intactId="EBI-983719">
        <id>Q9BZS1</id>
        <label>FOXP3</label>
    </interactant>
    <organismsDiffer>false</organismsDiffer>
    <experiments>3</experiments>
</comment>
<comment type="interaction">
    <interactant intactId="EBI-740343">
        <id>Q93062-3</id>
    </interactant>
    <interactant intactId="EBI-2806671">
        <id>P23769</id>
        <label>GATA2</label>
    </interactant>
    <organismsDiffer>false</organismsDiffer>
    <experiments>3</experiments>
</comment>
<comment type="interaction">
    <interactant intactId="EBI-740343">
        <id>Q93062-3</id>
    </interactant>
    <interactant intactId="EBI-10188645">
        <id>O75603</id>
        <label>GCM2</label>
    </interactant>
    <organismsDiffer>false</organismsDiffer>
    <experiments>3</experiments>
</comment>
<comment type="interaction">
    <interactant intactId="EBI-740343">
        <id>Q93062-3</id>
    </interactant>
    <interactant intactId="EBI-7251368">
        <id>Q9BZE0</id>
        <label>GLIS2</label>
    </interactant>
    <organismsDiffer>false</organismsDiffer>
    <experiments>3</experiments>
</comment>
<comment type="interaction">
    <interactant intactId="EBI-740343">
        <id>Q93062-3</id>
    </interactant>
    <interactant intactId="EBI-9834454">
        <id>P08631-2</id>
        <label>HCK</label>
    </interactant>
    <organismsDiffer>false</organismsDiffer>
    <experiments>3</experiments>
</comment>
<comment type="interaction">
    <interactant intactId="EBI-740343">
        <id>Q93062-3</id>
    </interactant>
    <interactant intactId="EBI-466029">
        <id>P42858</id>
        <label>HTT</label>
    </interactant>
    <organismsDiffer>false</organismsDiffer>
    <experiments>3</experiments>
</comment>
<comment type="interaction">
    <interactant intactId="EBI-740343">
        <id>Q93062-3</id>
    </interactant>
    <interactant intactId="EBI-6509505">
        <id>Q0VD86</id>
        <label>INCA1</label>
    </interactant>
    <organismsDiffer>false</organismsDiffer>
    <experiments>3</experiments>
</comment>
<comment type="interaction">
    <interactant intactId="EBI-740343">
        <id>Q93062-3</id>
    </interactant>
    <interactant intactId="EBI-9478422">
        <id>Q96G42</id>
        <label>KLHDC7B</label>
    </interactant>
    <organismsDiffer>false</organismsDiffer>
    <experiments>3</experiments>
</comment>
<comment type="interaction">
    <interactant intactId="EBI-740343">
        <id>Q93062-3</id>
    </interactant>
    <interactant intactId="EBI-1052037">
        <id>Q8IUC1</id>
        <label>KRTAP11-1</label>
    </interactant>
    <organismsDiffer>false</organismsDiffer>
    <experiments>3</experiments>
</comment>
<comment type="interaction">
    <interactant intactId="EBI-740343">
        <id>Q93062-3</id>
    </interactant>
    <interactant intactId="EBI-10210845">
        <id>P59990</id>
        <label>KRTAP12-1</label>
    </interactant>
    <organismsDiffer>false</organismsDiffer>
    <experiments>3</experiments>
</comment>
<comment type="interaction">
    <interactant intactId="EBI-740343">
        <id>Q93062-3</id>
    </interactant>
    <interactant intactId="EBI-10176396">
        <id>P60329</id>
        <label>KRTAP12-4</label>
    </interactant>
    <organismsDiffer>false</organismsDiffer>
    <experiments>3</experiments>
</comment>
<comment type="interaction">
    <interactant intactId="EBI-740343">
        <id>Q93062-3</id>
    </interactant>
    <interactant intactId="EBI-10241252">
        <id>Q3SY46</id>
        <label>KRTAP13-3</label>
    </interactant>
    <organismsDiffer>false</organismsDiffer>
    <experiments>3</experiments>
</comment>
<comment type="interaction">
    <interactant intactId="EBI-740343">
        <id>Q93062-3</id>
    </interactant>
    <interactant intactId="EBI-11992140">
        <id>Q3LI76</id>
        <label>KRTAP15-1</label>
    </interactant>
    <organismsDiffer>false</organismsDiffer>
    <experiments>6</experiments>
</comment>
<comment type="interaction">
    <interactant intactId="EBI-740343">
        <id>Q93062-3</id>
    </interactant>
    <interactant intactId="EBI-12811111">
        <id>Q8IUB9</id>
        <label>KRTAP19-1</label>
    </interactant>
    <organismsDiffer>false</organismsDiffer>
    <experiments>3</experiments>
</comment>
<comment type="interaction">
    <interactant intactId="EBI-740343">
        <id>Q93062-3</id>
    </interactant>
    <interactant intactId="EBI-12020132">
        <id>Q7Z4W3</id>
        <label>KRTAP19-3</label>
    </interactant>
    <organismsDiffer>false</organismsDiffer>
    <experiments>3</experiments>
</comment>
<comment type="interaction">
    <interactant intactId="EBI-740343">
        <id>Q93062-3</id>
    </interactant>
    <interactant intactId="EBI-1048945">
        <id>Q3LI72</id>
        <label>KRTAP19-5</label>
    </interactant>
    <organismsDiffer>false</organismsDiffer>
    <experiments>6</experiments>
</comment>
<comment type="interaction">
    <interactant intactId="EBI-740343">
        <id>Q93062-3</id>
    </interactant>
    <interactant intactId="EBI-10241353">
        <id>Q3SYF9</id>
        <label>KRTAP19-7</label>
    </interactant>
    <organismsDiffer>false</organismsDiffer>
    <experiments>6</experiments>
</comment>
<comment type="interaction">
    <interactant intactId="EBI-740343">
        <id>Q93062-3</id>
    </interactant>
    <interactant intactId="EBI-3957672">
        <id>Q6PEX3</id>
        <label>KRTAP26-1</label>
    </interactant>
    <organismsDiffer>false</organismsDiffer>
    <experiments>3</experiments>
</comment>
<comment type="interaction">
    <interactant intactId="EBI-740343">
        <id>Q93062-3</id>
    </interactant>
    <interactant intactId="EBI-9996449">
        <id>Q9BYR8</id>
        <label>KRTAP3-1</label>
    </interactant>
    <organismsDiffer>false</organismsDiffer>
    <experiments>3</experiments>
</comment>
<comment type="interaction">
    <interactant intactId="EBI-740343">
        <id>Q93062-3</id>
    </interactant>
    <interactant intactId="EBI-9088686">
        <id>Q14847-2</id>
        <label>LASP1</label>
    </interactant>
    <organismsDiffer>false</organismsDiffer>
    <experiments>8</experiments>
</comment>
<comment type="interaction">
    <interactant intactId="EBI-740343">
        <id>Q93062-3</id>
    </interactant>
    <interactant intactId="EBI-12853322">
        <id>P55197-2</id>
        <label>MLLT10</label>
    </interactant>
    <organismsDiffer>false</organismsDiffer>
    <experiments>3</experiments>
</comment>
<comment type="interaction">
    <interactant intactId="EBI-740343">
        <id>Q93062-3</id>
    </interactant>
    <interactant intactId="EBI-3919342">
        <id>P28360</id>
        <label>MSX1</label>
    </interactant>
    <organismsDiffer>false</organismsDiffer>
    <experiments>3</experiments>
</comment>
<comment type="interaction">
    <interactant intactId="EBI-740343">
        <id>Q93062-3</id>
    </interactant>
    <interactant intactId="EBI-12813813">
        <id>A7E2Y1-2</id>
        <label>MYH7B</label>
    </interactant>
    <organismsDiffer>false</organismsDiffer>
    <experiments>3</experiments>
</comment>
<comment type="interaction">
    <interactant intactId="EBI-740343">
        <id>Q93062-3</id>
    </interactant>
    <interactant intactId="EBI-936601">
        <id>P52952</id>
        <label>NKX2-5</label>
    </interactant>
    <organismsDiffer>false</organismsDiffer>
    <experiments>3</experiments>
</comment>
<comment type="interaction">
    <interactant intactId="EBI-740343">
        <id>Q93062-3</id>
    </interactant>
    <interactant intactId="EBI-11022007">
        <id>Q9HBE1-4</id>
        <label>PATZ1</label>
    </interactant>
    <organismsDiffer>false</organismsDiffer>
    <experiments>6</experiments>
</comment>
<comment type="interaction">
    <interactant intactId="EBI-740343">
        <id>Q93062-3</id>
    </interactant>
    <interactant intactId="EBI-530034">
        <id>O43189</id>
        <label>PHF1</label>
    </interactant>
    <organismsDiffer>false</organismsDiffer>
    <experiments>3</experiments>
</comment>
<comment type="interaction">
    <interactant intactId="EBI-740343">
        <id>Q93062-3</id>
    </interactant>
    <interactant intactId="EBI-748265">
        <id>P78337</id>
        <label>PITX1</label>
    </interactant>
    <organismsDiffer>false</organismsDiffer>
    <experiments>4</experiments>
</comment>
<comment type="interaction">
    <interactant intactId="EBI-740343">
        <id>Q93062-3</id>
    </interactant>
    <interactant intactId="EBI-12138495">
        <id>Q99697-2</id>
        <label>PITX2</label>
    </interactant>
    <organismsDiffer>false</organismsDiffer>
    <experiments>3</experiments>
</comment>
<comment type="interaction">
    <interactant intactId="EBI-740343">
        <id>Q93062-3</id>
    </interactant>
    <interactant intactId="EBI-769257">
        <id>Q9NRQ2</id>
        <label>PLSCR4</label>
    </interactant>
    <organismsDiffer>false</organismsDiffer>
    <experiments>3</experiments>
</comment>
<comment type="interaction">
    <interactant intactId="EBI-740343">
        <id>Q93062-3</id>
    </interactant>
    <interactant intactId="EBI-1389308">
        <id>Q7Z3K3</id>
        <label>POGZ</label>
    </interactant>
    <organismsDiffer>false</organismsDiffer>
    <experiments>5</experiments>
</comment>
<comment type="interaction">
    <interactant intactId="EBI-740343">
        <id>Q93062-3</id>
    </interactant>
    <interactant intactId="EBI-17236143">
        <id>Q12837</id>
        <label>POU4F2</label>
    </interactant>
    <organismsDiffer>false</organismsDiffer>
    <experiments>3</experiments>
</comment>
<comment type="interaction">
    <interactant intactId="EBI-740343">
        <id>Q93062-3</id>
    </interactant>
    <interactant intactId="EBI-12029004">
        <id>P78424</id>
        <label>POU6F2</label>
    </interactant>
    <organismsDiffer>false</organismsDiffer>
    <experiments>3</experiments>
</comment>
<comment type="interaction">
    <interactant intactId="EBI-740343">
        <id>Q93062-3</id>
    </interactant>
    <interactant intactId="EBI-1053424">
        <id>O43741</id>
        <label>PRKAB2</label>
    </interactant>
    <organismsDiffer>false</organismsDiffer>
    <experiments>3</experiments>
</comment>
<comment type="interaction">
    <interactant intactId="EBI-740343">
        <id>Q93062-3</id>
    </interactant>
    <interactant intactId="EBI-12754095">
        <id>P86480</id>
        <label>PRR20D</label>
    </interactant>
    <organismsDiffer>false</organismsDiffer>
    <experiments>3</experiments>
</comment>
<comment type="interaction">
    <interactant intactId="EBI-740343">
        <id>Q93062-3</id>
    </interactant>
    <interactant intactId="EBI-11986293">
        <id>P0CG20</id>
        <label>PRR35</label>
    </interactant>
    <organismsDiffer>false</organismsDiffer>
    <experiments>3</experiments>
</comment>
<comment type="interaction">
    <interactant intactId="EBI-740343">
        <id>Q93062-3</id>
    </interactant>
    <interactant intactId="EBI-21691855">
        <id>Q9UQ72-2</id>
        <label>PSG11</label>
    </interactant>
    <organismsDiffer>false</organismsDiffer>
    <experiments>3</experiments>
</comment>
<comment type="interaction">
    <interactant intactId="EBI-740343">
        <id>Q93062-3</id>
    </interactant>
    <interactant intactId="EBI-948156">
        <id>Q9Y4B4</id>
        <label>RAD54L2</label>
    </interactant>
    <organismsDiffer>false</organismsDiffer>
    <experiments>3</experiments>
</comment>
<comment type="interaction">
    <interactant intactId="EBI-740343">
        <id>Q93062-3</id>
    </interactant>
    <interactant intactId="EBI-12123390">
        <id>Q9NWB1-5</id>
        <label>RBFOX1</label>
    </interactant>
    <organismsDiffer>false</organismsDiffer>
    <experiments>4</experiments>
</comment>
<comment type="interaction">
    <interactant intactId="EBI-740343">
        <id>Q93062-3</id>
    </interactant>
    <interactant intactId="EBI-11963050">
        <id>O43251-10</id>
        <label>RBFOX2</label>
    </interactant>
    <organismsDiffer>false</organismsDiffer>
    <experiments>3</experiments>
</comment>
<comment type="interaction">
    <interactant intactId="EBI-740343">
        <id>Q93062-3</id>
    </interactant>
    <interactant intactId="EBI-12224445">
        <id>Q9BX46-2</id>
        <label>RBM24</label>
    </interactant>
    <organismsDiffer>false</organismsDiffer>
    <experiments>3</experiments>
</comment>
<comment type="interaction">
    <interactant intactId="EBI-740343">
        <id>Q93062-3</id>
    </interactant>
    <interactant intactId="EBI-11987469">
        <id>Q6ZRY4</id>
        <label>RBPMS2</label>
    </interactant>
    <organismsDiffer>false</organismsDiffer>
    <experiments>3</experiments>
</comment>
<comment type="interaction">
    <interactant intactId="EBI-740343">
        <id>Q93062-3</id>
    </interactant>
    <interactant intactId="EBI-3916363">
        <id>Q96NR8</id>
        <label>RDH12</label>
    </interactant>
    <organismsDiffer>false</organismsDiffer>
    <experiments>3</experiments>
</comment>
<comment type="interaction">
    <interactant intactId="EBI-740343">
        <id>Q93062-3</id>
    </interactant>
    <interactant intactId="EBI-372094">
        <id>Q9BQY4</id>
        <label>RHOXF2</label>
    </interactant>
    <organismsDiffer>false</organismsDiffer>
    <experiments>3</experiments>
</comment>
<comment type="interaction">
    <interactant intactId="EBI-740343">
        <id>Q93062-3</id>
    </interactant>
    <interactant intactId="EBI-366570">
        <id>Q9BUL9</id>
        <label>RPP25</label>
    </interactant>
    <organismsDiffer>false</organismsDiffer>
    <experiments>3</experiments>
</comment>
<comment type="interaction">
    <interactant intactId="EBI-740343">
        <id>Q93062-3</id>
    </interactant>
    <interactant intactId="EBI-6257312">
        <id>Q9BVN2</id>
        <label>RUSC1</label>
    </interactant>
    <organismsDiffer>false</organismsDiffer>
    <experiments>3</experiments>
</comment>
<comment type="interaction">
    <interactant intactId="EBI-740343">
        <id>Q93062-3</id>
    </interactant>
    <interactant intactId="EBI-12065614">
        <id>Q6ZT89-3</id>
        <label>SLC25A48</label>
    </interactant>
    <organismsDiffer>false</organismsDiffer>
    <experiments>3</experiments>
</comment>
<comment type="interaction">
    <interactant intactId="EBI-740343">
        <id>Q93062-3</id>
    </interactant>
    <interactant intactId="EBI-12061577">
        <id>Q8IYB5-2</id>
        <label>SMAP1</label>
    </interactant>
    <organismsDiffer>false</organismsDiffer>
    <experiments>3</experiments>
</comment>
<comment type="interaction">
    <interactant intactId="EBI-740343">
        <id>Q93062-3</id>
    </interactant>
    <interactant intactId="EBI-12275818">
        <id>Q53HV7-2</id>
        <label>SMUG1</label>
    </interactant>
    <organismsDiffer>false</organismsDiffer>
    <experiments>6</experiments>
</comment>
<comment type="interaction">
    <interactant intactId="EBI-740343">
        <id>Q93062-3</id>
    </interactant>
    <interactant intactId="EBI-766589">
        <id>P09234</id>
        <label>SNRPC</label>
    </interactant>
    <organismsDiffer>false</organismsDiffer>
    <experiments>3</experiments>
</comment>
<comment type="interaction">
    <interactant intactId="EBI-740343">
        <id>Q93062-3</id>
    </interactant>
    <interactant intactId="EBI-743976">
        <id>Q96LM6</id>
        <label>SPMIP9</label>
    </interactant>
    <organismsDiffer>false</organismsDiffer>
    <experiments>3</experiments>
</comment>
<comment type="interaction">
    <interactant intactId="EBI-740343">
        <id>Q93062-3</id>
    </interactant>
    <interactant intactId="EBI-16433759">
        <id>A0A0S2Z5K8</id>
        <label>STRBP</label>
    </interactant>
    <organismsDiffer>false</organismsDiffer>
    <experiments>3</experiments>
</comment>
<comment type="interaction">
    <interactant intactId="EBI-740343">
        <id>Q93062-3</id>
    </interactant>
    <interactant intactId="EBI-740355">
        <id>Q96SI9</id>
        <label>STRBP</label>
    </interactant>
    <organismsDiffer>false</organismsDiffer>
    <experiments>3</experiments>
</comment>
<comment type="interaction">
    <interactant intactId="EBI-740343">
        <id>Q93062-3</id>
    </interactant>
    <interactant intactId="EBI-2824328">
        <id>O95947</id>
        <label>TBX6</label>
    </interactant>
    <organismsDiffer>false</organismsDiffer>
    <experiments>4</experiments>
</comment>
<comment type="interaction">
    <interactant intactId="EBI-740343">
        <id>Q93062-3</id>
    </interactant>
    <interactant intactId="EBI-710310">
        <id>Q15560</id>
        <label>TCEA2</label>
    </interactant>
    <organismsDiffer>false</organismsDiffer>
    <experiments>3</experiments>
</comment>
<comment type="interaction">
    <interactant intactId="EBI-740343">
        <id>Q93062-3</id>
    </interactant>
    <interactant intactId="EBI-10239812">
        <id>Q96M29</id>
        <label>TEKT5</label>
    </interactant>
    <organismsDiffer>false</organismsDiffer>
    <experiments>3</experiments>
</comment>
<comment type="interaction">
    <interactant intactId="EBI-740343">
        <id>Q93062-3</id>
    </interactant>
    <interactant intactId="EBI-11741437">
        <id>Q08117-2</id>
        <label>TLE5</label>
    </interactant>
    <organismsDiffer>false</organismsDiffer>
    <experiments>5</experiments>
</comment>
<comment type="interaction">
    <interactant intactId="EBI-740343">
        <id>Q93062-3</id>
    </interactant>
    <interactant intactId="EBI-12038591">
        <id>Q69YG0</id>
        <label>TMEM42</label>
    </interactant>
    <organismsDiffer>false</organismsDiffer>
    <experiments>3</experiments>
</comment>
<comment type="interaction">
    <interactant intactId="EBI-740343">
        <id>Q93062-3</id>
    </interactant>
    <interactant intactId="EBI-12806590">
        <id>Q86WV8</id>
        <label>TSC1</label>
    </interactant>
    <organismsDiffer>false</organismsDiffer>
    <experiments>3</experiments>
</comment>
<comment type="interaction">
    <interactant intactId="EBI-740343">
        <id>Q93062-3</id>
    </interactant>
    <interactant intactId="EBI-10241197">
        <id>Q3SY00</id>
        <label>TSGA10IP</label>
    </interactant>
    <organismsDiffer>false</organismsDiffer>
    <experiments>3</experiments>
</comment>
<comment type="interaction">
    <interactant intactId="EBI-740343">
        <id>Q93062-3</id>
    </interactant>
    <interactant intactId="EBI-12023322">
        <id>Q8N831</id>
        <label>TSPYL6</label>
    </interactant>
    <organismsDiffer>false</organismsDiffer>
    <experiments>3</experiments>
</comment>
<comment type="interaction">
    <interactant intactId="EBI-740343">
        <id>Q93062-3</id>
    </interactant>
    <interactant intactId="EBI-2514383">
        <id>Q5T6F2</id>
        <label>UBAP2</label>
    </interactant>
    <organismsDiffer>false</organismsDiffer>
    <experiments>3</experiments>
</comment>
<comment type="interaction">
    <interactant intactId="EBI-740343">
        <id>Q93062-3</id>
    </interactant>
    <interactant intactId="EBI-11980193">
        <id>Q14119</id>
        <label>VEZF1</label>
    </interactant>
    <organismsDiffer>false</organismsDiffer>
    <experiments>3</experiments>
</comment>
<comment type="interaction">
    <interactant intactId="EBI-740343">
        <id>Q93062-3</id>
    </interactant>
    <interactant intactId="EBI-11957216">
        <id>A8MV65-2</id>
        <label>VGLL3</label>
    </interactant>
    <organismsDiffer>false</organismsDiffer>
    <experiments>3</experiments>
</comment>
<comment type="interaction">
    <interactant intactId="EBI-740343">
        <id>Q93062-3</id>
    </interactant>
    <interactant intactId="EBI-10254232">
        <id>Q6RSH7</id>
        <label>VHLL</label>
    </interactant>
    <organismsDiffer>false</organismsDiffer>
    <experiments>3</experiments>
</comment>
<comment type="interaction">
    <interactant intactId="EBI-740343">
        <id>Q93062-3</id>
    </interactant>
    <interactant intactId="EBI-2559305">
        <id>A5D8V6</id>
        <label>VPS37C</label>
    </interactant>
    <organismsDiffer>false</organismsDiffer>
    <experiments>3</experiments>
</comment>
<comment type="interaction">
    <interactant intactId="EBI-740343">
        <id>Q93062-3</id>
    </interactant>
    <interactant intactId="EBI-10188476">
        <id>A0A0C4DGF1</id>
        <label>ZBTB32</label>
    </interactant>
    <organismsDiffer>false</organismsDiffer>
    <experiments>7</experiments>
</comment>
<comment type="interaction">
    <interactant intactId="EBI-740343">
        <id>Q93062-3</id>
    </interactant>
    <interactant intactId="EBI-11963196">
        <id>Q15915</id>
        <label>ZIC1</label>
    </interactant>
    <organismsDiffer>false</organismsDiffer>
    <experiments>3</experiments>
</comment>
<comment type="interaction">
    <interactant intactId="EBI-740343">
        <id>Q93062-3</id>
    </interactant>
    <interactant intactId="EBI-745520">
        <id>Q9P0T4</id>
        <label>ZNF581</label>
    </interactant>
    <organismsDiffer>false</organismsDiffer>
    <experiments>8</experiments>
</comment>
<comment type="subcellular location">
    <subcellularLocation>
        <location evidence="5 6">Nucleus</location>
    </subcellularLocation>
    <subcellularLocation>
        <location evidence="5 6">Cytoplasm</location>
    </subcellularLocation>
    <subcellularLocation>
        <location evidence="6">Cytoplasm</location>
        <location evidence="6">Stress granule</location>
    </subcellularLocation>
    <subcellularLocation>
        <location evidence="7">Cytoplasm</location>
        <location evidence="7">P-body</location>
    </subcellularLocation>
    <text evidence="6 7">Localized to cytoplasmic stress granules after oxidative stress (PubMed:24860013). Translocates into cytoplasmic stress granules that probably corresponds to P-bodies in response to oxidative stress (PubMed:26347403).</text>
</comment>
<comment type="alternative products">
    <event type="alternative splicing"/>
    <isoform>
        <id>Q93062-1</id>
        <name>A</name>
        <sequence type="displayed"/>
    </isoform>
    <isoform>
        <id>Q93062-2</id>
        <name>B</name>
        <sequence type="described" ref="VSP_005813"/>
    </isoform>
    <isoform>
        <id>Q93062-3</id>
        <name>C</name>
        <sequence type="described" ref="VSP_005814"/>
    </isoform>
    <isoform>
        <id>Q93062-4</id>
        <name>D</name>
        <sequence type="described" ref="VSP_005815"/>
    </isoform>
    <isoform>
        <id>Q93062-5</id>
        <name>E</name>
        <sequence type="described" ref="VSP_005816"/>
    </isoform>
    <text>Additional isoforms seem to exist.</text>
</comment>
<comment type="tissue specificity">
    <text evidence="8">Ubiquitously expressed, at various levels depending on the isoform and the tissue (PubMed:8855282). Strongly expressed in the heart, prostate, small intestine, large intestine, and ovary; moderately expressed in the placenta, lung, liver, kidney, pancreas, and testis; and poorly expressed in the skeletal muscle, spleen, thymus and peripheral leukocytes (PubMed:8855282).</text>
</comment>
<comment type="domain">
    <text evidence="5 6 7">The RNA recognition motif (RRM) domain mediates homodimerization (PubMed:26347403). The RRM domain also mediates binding to tandem CAC trinucleotide motif-containing single-stranded RNA (PubMed:24860013, PubMed:26347403). The RRM domain is also necessary for interaction with SMAD4 and for TGFB1/Smad-mediated transactivation activity (PubMed:17099224).</text>
</comment>
<comment type="domain">
    <molecule>Isoform A</molecule>
    <text evidence="1">The C-terminal 20 amino acids region, without homology to other proteins, is essential for higher-order oligomerization (By similarity). Also essential for RBPMS cooperative RNA binding (By similarity).</text>
</comment>
<comment type="domain">
    <molecule>Isoform C</molecule>
    <text evidence="5">The C-terminal is required for TGFB1/Smad-mediated transactivation activity.</text>
</comment>
<comment type="miscellaneous">
    <molecule>Isoform A</molecule>
    <text evidence="4">May be produced at very low levels due to a premature stop codon in the mRNA, leading to nonsense-mediated mRNA decay.</text>
</comment>
<proteinExistence type="evidence at protein level"/>
<accession>Q93062</accession>
<accession>D3DSU9</accession>
<accession>Q92516</accession>
<accession>Q92517</accession>
<accession>Q92518</accession>
<accession>Q96J26</accession>
<name>RBPMS_HUMAN</name>
<keyword id="KW-0002">3D-structure</keyword>
<keyword id="KW-0007">Acetylation</keyword>
<keyword id="KW-0010">Activator</keyword>
<keyword id="KW-0025">Alternative splicing</keyword>
<keyword id="KW-0963">Cytoplasm</keyword>
<keyword id="KW-0539">Nucleus</keyword>
<keyword id="KW-0597">Phosphoprotein</keyword>
<keyword id="KW-1267">Proteomics identification</keyword>
<keyword id="KW-1185">Reference proteome</keyword>
<keyword id="KW-0694">RNA-binding</keyword>
<keyword id="KW-0804">Transcription</keyword>
<keyword id="KW-0805">Transcription regulation</keyword>
<sequence length="196" mass="21802">MNNGGKAEKENTPSEANLQEEEVRTLFVSGLPLDIKPRELYLLFRPFKGYEGSLIKLTSKQPVGFVSFDSRSEAEAAKNALNGIRFDPEIPQTLRLEFAKANTKMAKNKLVGTPNPSTPLPNTVPQFIAREPYELTVPALYPSSPEVWAPYPLYPAELAPALPPPAFTYPASLHAQMRWLPPSEATSQGWKSRQFC</sequence>
<organism>
    <name type="scientific">Homo sapiens</name>
    <name type="common">Human</name>
    <dbReference type="NCBI Taxonomy" id="9606"/>
    <lineage>
        <taxon>Eukaryota</taxon>
        <taxon>Metazoa</taxon>
        <taxon>Chordata</taxon>
        <taxon>Craniata</taxon>
        <taxon>Vertebrata</taxon>
        <taxon>Euteleostomi</taxon>
        <taxon>Mammalia</taxon>
        <taxon>Eutheria</taxon>
        <taxon>Euarchontoglires</taxon>
        <taxon>Primates</taxon>
        <taxon>Haplorrhini</taxon>
        <taxon>Catarrhini</taxon>
        <taxon>Hominidae</taxon>
        <taxon>Homo</taxon>
    </lineage>
</organism>
<evidence type="ECO:0000250" key="1">
    <source>
        <dbReference type="UniProtKB" id="A0A8I6G705"/>
    </source>
</evidence>
<evidence type="ECO:0000250" key="2">
    <source>
        <dbReference type="UniProtKB" id="Q9WVB0"/>
    </source>
</evidence>
<evidence type="ECO:0000255" key="3">
    <source>
        <dbReference type="PROSITE-ProRule" id="PRU00176"/>
    </source>
</evidence>
<evidence type="ECO:0000269" key="4">
    <source>
    </source>
</evidence>
<evidence type="ECO:0000269" key="5">
    <source>
    </source>
</evidence>
<evidence type="ECO:0000269" key="6">
    <source>
    </source>
</evidence>
<evidence type="ECO:0000269" key="7">
    <source>
    </source>
</evidence>
<evidence type="ECO:0000269" key="8">
    <source>
    </source>
</evidence>
<evidence type="ECO:0000303" key="9">
    <source>
    </source>
</evidence>
<evidence type="ECO:0000303" key="10">
    <source>
    </source>
</evidence>
<evidence type="ECO:0000303" key="11">
    <source>
    </source>
</evidence>
<evidence type="ECO:0000312" key="12">
    <source>
        <dbReference type="HGNC" id="HGNC:19097"/>
    </source>
</evidence>
<evidence type="ECO:0007744" key="13">
    <source>
        <dbReference type="PDB" id="5CYJ"/>
    </source>
</evidence>
<evidence type="ECO:0007744" key="14">
    <source>
        <dbReference type="PDB" id="5DET"/>
    </source>
</evidence>
<evidence type="ECO:0007744" key="15">
    <source>
    </source>
</evidence>
<evidence type="ECO:0007744" key="16">
    <source>
    </source>
</evidence>
<evidence type="ECO:0007829" key="17">
    <source>
        <dbReference type="PDB" id="5CYJ"/>
    </source>
</evidence>
<gene>
    <name evidence="12" type="primary">RBPMS</name>
    <name type="synonym">HERMES</name>
</gene>